<comment type="function">
    <text evidence="1 8 13 14 15 16 18 25 27 30 31 33">Non-catalytic component of the TSC-TBC complex, a multiprotein complex that acts as a negative regulator of the canonical mTORC1 complex, an evolutionarily conserved central nutrient sensor that stimulates anabolic reactions and macromolecule biosynthesis to promote cellular biomass generation and growth (PubMed:12172553, PubMed:12271141, PubMed:12906785, PubMed:15340059, PubMed:24529379, PubMed:28215400). The TSC-TBC complex acts as a GTPase-activating protein (GAP) for the small GTPase RHEB, a direct activator of the protein kinase activity of mTORC1 (PubMed:12906785, PubMed:15340059, PubMed:24529379). In absence of nutrients, the TSC-TBC complex inhibits mTORC1, thereby preventing phosphorylation of ribosomal protein S6 kinase (RPS6KB1 and RPS6KB2) and EIF4EBP1 (4E-BP1) by the mTORC1 signaling (PubMed:12271141, PubMed:24529379, PubMed:28215400, PubMed:33215753). The TSC-TBC complex is inactivated in response to nutrients, relieving inhibition of mTORC1 (PubMed:12172553, PubMed:24529379). Within the TSC-TBC complex, TSC1 stabilizes TSC2 and prevents TSC2 self-aggregation (PubMed:10585443, PubMed:28215400). Acts as a tumor suppressor (PubMed:9242607). Involved in microtubule-mediated protein transport via its ability to regulate mTORC1 signaling (By similarity). Also acts as a co-chaperone for HSP90AA1 facilitating HSP90AA1 chaperoning of protein clients such as kinases, TSC2 and glucocorticoid receptor NR3C1 (PubMed:29127155). Increases ATP binding to HSP90AA1 and inhibits HSP90AA1 ATPase activity (PubMed:29127155). Competes with the activating co-chaperone AHSA1 for binding to HSP90AA1, thereby providing a reciprocal regulatory mechanism for chaperoning of client proteins (PubMed:29127155). Recruits TSC2 to HSP90AA1 and stabilizes TSC2 by preventing the interaction between TSC2 and ubiquitin ligase HERC1 (PubMed:16464865, PubMed:29127155).</text>
</comment>
<comment type="subunit">
    <text evidence="8 13 15 17 18 19 20 24 25 26 27 28 29 30 31 32 35 36">Component of the TSC-TBC complex (also named Rhebulator complex), composed of 2 molecules of TSC1, 2 molecules of TSC2 and 1 molecule of TBC1D7 (PubMed:10585443, PubMed:12172553, PubMed:12906785, PubMed:15963462, PubMed:16464865, PubMed:17658474, PubMed:22795129, PubMed:24529379, PubMed:26893383, PubMed:28215400, PubMed:33215753, PubMed:33436626, PubMed:9580671, PubMed:9809973). Probably forms a complex composed of chaperones HSP90 and HSP70, co-chaperones STIP1/HOP, CDC37, PPP5C, PTGES3/p23, TSC1 and client protein TSC2 (PubMed:29127155). Forms a complex composed of chaperones HSP90 and HSP70, co-chaperones CDC37, PPP5C, TSC1 and client protein TSC2, CDK4, AKT, RAF1 and NR3C1; this complex does not contain co-chaperones STIP1/HOP and PTGES3/p23 (PubMed:29127155). Forms a complex containing HSP90AA1, TSC1 and TSC2; TSC1 is required to recruit TCS2 to the complex (PubMed:29127155). Interacts (via C-terminus) with the closed form of HSP90AA1 (via the middle domain and TPR repeat-binding motif) (PubMed:29127155). Interacts with DOCK7 (PubMed:15963462). Interacts with FBXW5 (PubMed:18381890). Interacts with WDR45B (PubMed:28561066). Interacts with RPAP3 and URI1 (PubMed:28561026).</text>
</comment>
<comment type="interaction">
    <interactant intactId="EBI-1047085">
        <id>Q92574</id>
    </interactant>
    <interactant intactId="EBI-741753">
        <id>Q00994</id>
        <label>BEX3</label>
    </interactant>
    <organismsDiffer>false</organismsDiffer>
    <experiments>5</experiments>
</comment>
<comment type="interaction">
    <interactant intactId="EBI-1047085">
        <id>Q92574</id>
    </interactant>
    <interactant intactId="EBI-713259">
        <id>P02794</id>
        <label>FTH1</label>
    </interactant>
    <organismsDiffer>false</organismsDiffer>
    <experiments>3</experiments>
</comment>
<comment type="interaction">
    <interactant intactId="EBI-1047085">
        <id>Q92574</id>
    </interactant>
    <interactant intactId="EBI-81266">
        <id>O14920</id>
        <label>IKBKB</label>
    </interactant>
    <organismsDiffer>false</organismsDiffer>
    <experiments>3</experiments>
</comment>
<comment type="interaction">
    <interactant intactId="EBI-1047085">
        <id>Q92574</id>
    </interactant>
    <interactant intactId="EBI-949239">
        <id>Q674X7</id>
        <label>KAZN</label>
    </interactant>
    <organismsDiffer>false</organismsDiffer>
    <experiments>2</experiments>
</comment>
<comment type="interaction">
    <interactant intactId="EBI-1047085">
        <id>Q92574</id>
    </interactant>
    <interactant intactId="EBI-73946">
        <id>Q16539</id>
        <label>MAPK14</label>
    </interactant>
    <organismsDiffer>false</organismsDiffer>
    <experiments>2</experiments>
</comment>
<comment type="interaction">
    <interactant intactId="EBI-1047085">
        <id>Q92574</id>
    </interactant>
    <interactant intactId="EBI-79165">
        <id>Q9NRD5</id>
        <label>PICK1</label>
    </interactant>
    <organismsDiffer>false</organismsDiffer>
    <experiments>2</experiments>
</comment>
<comment type="interaction">
    <interactant intactId="EBI-1047085">
        <id>Q92574</id>
    </interactant>
    <interactant intactId="EBI-2129375">
        <id>Q9BY78</id>
        <label>RNF26</label>
    </interactant>
    <organismsDiffer>false</organismsDiffer>
    <experiments>9</experiments>
</comment>
<comment type="interaction">
    <interactant intactId="EBI-1047085">
        <id>Q92574</id>
    </interactant>
    <interactant intactId="EBI-356349">
        <id>Q92844</id>
        <label>TANK</label>
    </interactant>
    <organismsDiffer>false</organismsDiffer>
    <experiments>3</experiments>
</comment>
<comment type="interaction">
    <interactant intactId="EBI-1047085">
        <id>Q92574</id>
    </interactant>
    <interactant intactId="EBI-3258000">
        <id>Q9P0N9</id>
        <label>TBC1D7</label>
    </interactant>
    <organismsDiffer>false</organismsDiffer>
    <experiments>5</experiments>
</comment>
<comment type="interaction">
    <interactant intactId="EBI-1047085">
        <id>Q92574</id>
    </interactant>
    <interactant intactId="EBI-396587">
        <id>P49815</id>
        <label>TSC2</label>
    </interactant>
    <organismsDiffer>false</organismsDiffer>
    <experiments>13</experiments>
</comment>
<comment type="subcellular location">
    <subcellularLocation>
        <location evidence="25">Lysosome membrane</location>
        <topology evidence="36">Peripheral membrane protein</topology>
    </subcellularLocation>
    <subcellularLocation>
        <location evidence="25 36">Cytoplasm</location>
        <location evidence="25 36">Cytosol</location>
    </subcellularLocation>
    <text evidence="25">Recruited to lysosomal membranes in a RHEB-dependent process in absence of nutrients (PubMed:24529379). In response to nutrients, the complex dissociates from lysosomal membranes and relocalizes to the cytosol (PubMed:24529379).</text>
</comment>
<comment type="alternative products">
    <event type="alternative splicing"/>
    <isoform>
        <id>Q92574-1</id>
        <name>1</name>
        <sequence type="displayed"/>
    </isoform>
    <isoform>
        <id>Q92574-2</id>
        <name>2</name>
        <sequence type="described" ref="VSP_042890"/>
    </isoform>
</comment>
<comment type="tissue specificity">
    <text evidence="33">Highly expressed in skeletal muscle, followed by heart, brain, placenta, pancreas, lung, liver and kidney (PubMed:9242607). Also expressed in embryonic kidney cells (PubMed:9242607).</text>
</comment>
<comment type="domain">
    <text evidence="35">The C-terminal putative coiled-coil domain is necessary for interaction with TSC2.</text>
</comment>
<comment type="PTM">
    <text evidence="17">Phosphorylation at Ser-505 does not affect interaction with TSC2.</text>
</comment>
<comment type="PTM">
    <text evidence="17">'Lys-63'-linked ubiquitinated at Lys-30 by PELI1; the ubiquitination promotes TSC1/TSC2 complex stability.</text>
</comment>
<comment type="disease" evidence="4 6 7 10 11 22 23 34">
    <disease id="DI-01106">
        <name>Tuberous sclerosis 1</name>
        <acronym>TSC1</acronym>
        <description>An autosomal dominant multi-system disorder that affects especially the brain, kidneys, heart, and skin. It is characterized by hamartomas (benign overgrowths predominantly of a cell or tissue type that occurs normally in the organ) and hamartias (developmental abnormalities of tissue combination). Clinical manifestations include epilepsy, learning difficulties, behavioral problems, and skin lesions. Seizures can be intractable and premature death can occur from a variety of disease-associated causes.</description>
        <dbReference type="MIM" id="191100"/>
    </disease>
    <text>The disease is caused by variants affecting the gene represented in this entry.</text>
</comment>
<comment type="disease" evidence="11">
    <disease id="DI-01919">
        <name>Lymphangioleiomyomatosis</name>
        <acronym>LAM</acronym>
        <description>Progressive and often fatal lung disease characterized by a diffuse proliferation of abnormal smooth muscle cells in the lungs. It affects almost exclusively young women and can occur as an isolated disorder or in association with tuberous sclerosis complex.</description>
        <dbReference type="MIM" id="606690"/>
    </disease>
    <text>The disease is caused by variants affecting the gene represented in this entry.</text>
</comment>
<comment type="disease" evidence="27">
    <disease id="DI-04980">
        <name>Focal cortical dysplasia 2</name>
        <acronym>FCORD2</acronym>
        <description>A form of focal cortical dysplasia, a malformation of cortical development that results in medically refractory epilepsy in the pediatric population and in adults. FCORD2 is a severe form, with onset usually in childhood, characterized by disrupted cortical lamination and specific cytological abnormalities. It is classified in 2 subtypes: type IIA characterized by dysmorphic neurons and lack of balloon cells; type IIB with dysmorphic neurons and balloon cells.</description>
        <dbReference type="MIM" id="607341"/>
    </disease>
    <text>The disease is caused by variants affecting the gene represented in this entry.</text>
</comment>
<comment type="online information" name="Atlas of Genetics and Cytogenetics in Oncology and Haematology">
    <link uri="https://atlasgeneticsoncology.org/gene/183/TSC1"/>
</comment>
<comment type="online information" name="Tuberous sclerosis database Tuberous sclerosis 1 (TSC1)">
    <link uri="https://databases.lovd.nl/shared/genes/TSC1"/>
    <text>Leiden Open Variation Database (LOVD)</text>
</comment>
<keyword id="KW-0002">3D-structure</keyword>
<keyword id="KW-0025">Alternative splicing</keyword>
<keyword id="KW-0143">Chaperone</keyword>
<keyword id="KW-0175">Coiled coil</keyword>
<keyword id="KW-0963">Cytoplasm</keyword>
<keyword id="KW-0225">Disease variant</keyword>
<keyword id="KW-0887">Epilepsy</keyword>
<keyword id="KW-1017">Isopeptide bond</keyword>
<keyword id="KW-0458">Lysosome</keyword>
<keyword id="KW-0472">Membrane</keyword>
<keyword id="KW-0597">Phosphoprotein</keyword>
<keyword id="KW-1267">Proteomics identification</keyword>
<keyword id="KW-1185">Reference proteome</keyword>
<keyword id="KW-0043">Tumor suppressor</keyword>
<keyword id="KW-0832">Ubl conjugation</keyword>
<evidence type="ECO:0000250" key="1">
    <source>
        <dbReference type="UniProtKB" id="Q9Z136"/>
    </source>
</evidence>
<evidence type="ECO:0000255" key="2"/>
<evidence type="ECO:0000256" key="3">
    <source>
        <dbReference type="SAM" id="MobiDB-lite"/>
    </source>
</evidence>
<evidence type="ECO:0000269" key="4">
    <source>
    </source>
</evidence>
<evidence type="ECO:0000269" key="5">
    <source>
    </source>
</evidence>
<evidence type="ECO:0000269" key="6">
    <source>
    </source>
</evidence>
<evidence type="ECO:0000269" key="7">
    <source>
    </source>
</evidence>
<evidence type="ECO:0000269" key="8">
    <source>
    </source>
</evidence>
<evidence type="ECO:0000269" key="9">
    <source>
    </source>
</evidence>
<evidence type="ECO:0000269" key="10">
    <source>
    </source>
</evidence>
<evidence type="ECO:0000269" key="11">
    <source>
    </source>
</evidence>
<evidence type="ECO:0000269" key="12">
    <source>
    </source>
</evidence>
<evidence type="ECO:0000269" key="13">
    <source>
    </source>
</evidence>
<evidence type="ECO:0000269" key="14">
    <source>
    </source>
</evidence>
<evidence type="ECO:0000269" key="15">
    <source>
    </source>
</evidence>
<evidence type="ECO:0000269" key="16">
    <source>
    </source>
</evidence>
<evidence type="ECO:0000269" key="17">
    <source>
    </source>
</evidence>
<evidence type="ECO:0000269" key="18">
    <source>
    </source>
</evidence>
<evidence type="ECO:0000269" key="19">
    <source>
    </source>
</evidence>
<evidence type="ECO:0000269" key="20">
    <source>
    </source>
</evidence>
<evidence type="ECO:0000269" key="21">
    <source>
    </source>
</evidence>
<evidence type="ECO:0000269" key="22">
    <source>
    </source>
</evidence>
<evidence type="ECO:0000269" key="23">
    <source>
    </source>
</evidence>
<evidence type="ECO:0000269" key="24">
    <source>
    </source>
</evidence>
<evidence type="ECO:0000269" key="25">
    <source>
    </source>
</evidence>
<evidence type="ECO:0000269" key="26">
    <source>
    </source>
</evidence>
<evidence type="ECO:0000269" key="27">
    <source>
    </source>
</evidence>
<evidence type="ECO:0000269" key="28">
    <source>
    </source>
</evidence>
<evidence type="ECO:0000269" key="29">
    <source>
    </source>
</evidence>
<evidence type="ECO:0000269" key="30">
    <source>
    </source>
</evidence>
<evidence type="ECO:0000269" key="31">
    <source>
    </source>
</evidence>
<evidence type="ECO:0000269" key="32">
    <source>
    </source>
</evidence>
<evidence type="ECO:0000269" key="33">
    <source>
    </source>
</evidence>
<evidence type="ECO:0000269" key="34">
    <source>
    </source>
</evidence>
<evidence type="ECO:0000269" key="35">
    <source>
    </source>
</evidence>
<evidence type="ECO:0000269" key="36">
    <source>
    </source>
</evidence>
<evidence type="ECO:0000269" key="37">
    <source>
    </source>
</evidence>
<evidence type="ECO:0000303" key="38">
    <source>
    </source>
</evidence>
<evidence type="ECO:0000303" key="39">
    <source>
    </source>
</evidence>
<evidence type="ECO:0000303" key="40">
    <source>
    </source>
</evidence>
<evidence type="ECO:0000303" key="41">
    <source>
    </source>
</evidence>
<evidence type="ECO:0000312" key="42">
    <source>
        <dbReference type="HGNC" id="HGNC:12362"/>
    </source>
</evidence>
<evidence type="ECO:0007744" key="43">
    <source>
        <dbReference type="PDB" id="5EJC"/>
    </source>
</evidence>
<evidence type="ECO:0007744" key="44">
    <source>
        <dbReference type="PDB" id="7DL2"/>
    </source>
</evidence>
<evidence type="ECO:0007744" key="45">
    <source>
    </source>
</evidence>
<evidence type="ECO:0007744" key="46">
    <source>
    </source>
</evidence>
<evidence type="ECO:0007744" key="47">
    <source>
    </source>
</evidence>
<evidence type="ECO:0007744" key="48">
    <source>
    </source>
</evidence>
<evidence type="ECO:0007829" key="49">
    <source>
        <dbReference type="PDB" id="4Z6Y"/>
    </source>
</evidence>
<evidence type="ECO:0007829" key="50">
    <source>
        <dbReference type="PDB" id="9CE3"/>
    </source>
</evidence>
<dbReference type="EMBL" id="AF013168">
    <property type="protein sequence ID" value="AAC51674.1"/>
    <property type="molecule type" value="mRNA"/>
</dbReference>
<dbReference type="EMBL" id="AK303030">
    <property type="protein sequence ID" value="BAH13883.1"/>
    <property type="molecule type" value="mRNA"/>
</dbReference>
<dbReference type="EMBL" id="AL445645">
    <property type="status" value="NOT_ANNOTATED_CDS"/>
    <property type="molecule type" value="Genomic_DNA"/>
</dbReference>
<dbReference type="EMBL" id="CH471090">
    <property type="protein sequence ID" value="EAW88021.1"/>
    <property type="molecule type" value="Genomic_DNA"/>
</dbReference>
<dbReference type="EMBL" id="AC002096">
    <property type="status" value="NOT_ANNOTATED_CDS"/>
    <property type="molecule type" value="Genomic_DNA"/>
</dbReference>
<dbReference type="EMBL" id="D87683">
    <property type="protein sequence ID" value="BAA13436.1"/>
    <property type="molecule type" value="mRNA"/>
</dbReference>
<dbReference type="EMBL" id="AF234185">
    <property type="protein sequence ID" value="AAF61948.1"/>
    <property type="molecule type" value="Genomic_DNA"/>
</dbReference>
<dbReference type="CCDS" id="CCDS55350.1">
    <molecule id="Q92574-2"/>
</dbReference>
<dbReference type="CCDS" id="CCDS6956.1">
    <molecule id="Q92574-1"/>
</dbReference>
<dbReference type="PIR" id="T03814">
    <property type="entry name" value="T03814"/>
</dbReference>
<dbReference type="RefSeq" id="NP_000359.1">
    <molecule id="Q92574-1"/>
    <property type="nucleotide sequence ID" value="NM_000368.5"/>
</dbReference>
<dbReference type="RefSeq" id="NP_001155898.1">
    <property type="nucleotide sequence ID" value="NM_001162426.1"/>
</dbReference>
<dbReference type="RefSeq" id="NP_001155899.1">
    <molecule id="Q92574-2"/>
    <property type="nucleotide sequence ID" value="NM_001162427.2"/>
</dbReference>
<dbReference type="RefSeq" id="NP_001393521.1">
    <molecule id="Q92574-1"/>
    <property type="nucleotide sequence ID" value="NM_001406592.1"/>
</dbReference>
<dbReference type="RefSeq" id="NP_001393522.1">
    <molecule id="Q92574-1"/>
    <property type="nucleotide sequence ID" value="NM_001406593.1"/>
</dbReference>
<dbReference type="RefSeq" id="NP_001393523.1">
    <molecule id="Q92574-1"/>
    <property type="nucleotide sequence ID" value="NM_001406594.1"/>
</dbReference>
<dbReference type="RefSeq" id="NP_001393524.1">
    <molecule id="Q92574-1"/>
    <property type="nucleotide sequence ID" value="NM_001406595.1"/>
</dbReference>
<dbReference type="RefSeq" id="NP_001393525.1">
    <molecule id="Q92574-1"/>
    <property type="nucleotide sequence ID" value="NM_001406596.1"/>
</dbReference>
<dbReference type="RefSeq" id="NP_001393539.1">
    <molecule id="Q92574-2"/>
    <property type="nucleotide sequence ID" value="NM_001406610.1"/>
</dbReference>
<dbReference type="RefSeq" id="XP_005272268.1">
    <property type="nucleotide sequence ID" value="XM_005272211.1"/>
</dbReference>
<dbReference type="RefSeq" id="XP_006717334.1">
    <property type="nucleotide sequence ID" value="XM_006717271.1"/>
</dbReference>
<dbReference type="RefSeq" id="XP_011517281.1">
    <molecule id="Q92574-1"/>
    <property type="nucleotide sequence ID" value="XM_011518979.3"/>
</dbReference>
<dbReference type="RefSeq" id="XP_016870585.1">
    <property type="nucleotide sequence ID" value="XM_017015096.1"/>
</dbReference>
<dbReference type="RefSeq" id="XP_016870586.1">
    <property type="nucleotide sequence ID" value="XM_017015097.1"/>
</dbReference>
<dbReference type="RefSeq" id="XP_054219693.1">
    <molecule id="Q92574-1"/>
    <property type="nucleotide sequence ID" value="XM_054363718.1"/>
</dbReference>
<dbReference type="PDB" id="4Z6Y">
    <property type="method" value="X-ray"/>
    <property type="resolution" value="2.81 A"/>
    <property type="chains" value="C/D/F/H=938-993"/>
</dbReference>
<dbReference type="PDB" id="5EJC">
    <property type="method" value="X-ray"/>
    <property type="resolution" value="3.10 A"/>
    <property type="chains" value="C/D/E/F=939-992"/>
</dbReference>
<dbReference type="PDB" id="7DL2">
    <property type="method" value="EM"/>
    <property type="resolution" value="4.40 A"/>
    <property type="chains" value="C/D=1-1164"/>
</dbReference>
<dbReference type="PDB" id="9C9I">
    <property type="method" value="X-ray"/>
    <property type="resolution" value="3.18 A"/>
    <property type="chains" value="B/D/F/H/X=648-681"/>
</dbReference>
<dbReference type="PDB" id="9CE3">
    <property type="method" value="EM"/>
    <property type="resolution" value="2.90 A"/>
    <property type="chains" value="C/D=1-1164"/>
</dbReference>
<dbReference type="PDBsum" id="4Z6Y"/>
<dbReference type="PDBsum" id="5EJC"/>
<dbReference type="PDBsum" id="7DL2"/>
<dbReference type="PDBsum" id="9C9I"/>
<dbReference type="PDBsum" id="9CE3"/>
<dbReference type="EMDB" id="EMD-11816"/>
<dbReference type="EMDB" id="EMD-11817"/>
<dbReference type="EMDB" id="EMD-11819"/>
<dbReference type="EMDB" id="EMD-30708"/>
<dbReference type="EMDB" id="EMD-45492"/>
<dbReference type="SMR" id="Q92574"/>
<dbReference type="BioGRID" id="113099">
    <property type="interactions" value="287"/>
</dbReference>
<dbReference type="ComplexPortal" id="CPX-6142">
    <property type="entry name" value="TSC1-TSC2 complex"/>
</dbReference>
<dbReference type="CORUM" id="Q92574"/>
<dbReference type="FunCoup" id="Q92574">
    <property type="interactions" value="3012"/>
</dbReference>
<dbReference type="IntAct" id="Q92574">
    <property type="interactions" value="146"/>
</dbReference>
<dbReference type="MINT" id="Q92574"/>
<dbReference type="STRING" id="9606.ENSP00000298552"/>
<dbReference type="CarbonylDB" id="Q92574"/>
<dbReference type="GlyGen" id="Q92574">
    <property type="glycosylation" value="3 sites, 1 O-linked glycan (2 sites)"/>
</dbReference>
<dbReference type="iPTMnet" id="Q92574"/>
<dbReference type="PhosphoSitePlus" id="Q92574"/>
<dbReference type="BioMuta" id="TSC1"/>
<dbReference type="DMDM" id="9297077"/>
<dbReference type="jPOST" id="Q92574"/>
<dbReference type="MassIVE" id="Q92574"/>
<dbReference type="PaxDb" id="9606-ENSP00000298552"/>
<dbReference type="PeptideAtlas" id="Q92574"/>
<dbReference type="ProteomicsDB" id="75334">
    <molecule id="Q92574-1"/>
</dbReference>
<dbReference type="ProteomicsDB" id="75335">
    <molecule id="Q92574-2"/>
</dbReference>
<dbReference type="Pumba" id="Q92574"/>
<dbReference type="Antibodypedia" id="3164">
    <property type="antibodies" value="1846 antibodies from 45 providers"/>
</dbReference>
<dbReference type="DNASU" id="7248"/>
<dbReference type="Ensembl" id="ENST00000298552.9">
    <molecule id="Q92574-1"/>
    <property type="protein sequence ID" value="ENSP00000298552.3"/>
    <property type="gene ID" value="ENSG00000165699.16"/>
</dbReference>
<dbReference type="Ensembl" id="ENST00000490179.4">
    <molecule id="Q92574-1"/>
    <property type="protein sequence ID" value="ENSP00000495533.2"/>
    <property type="gene ID" value="ENSG00000165699.16"/>
</dbReference>
<dbReference type="Ensembl" id="ENST00000643072.1">
    <molecule id="Q92574-2"/>
    <property type="protein sequence ID" value="ENSP00000496691.1"/>
    <property type="gene ID" value="ENSG00000165699.16"/>
</dbReference>
<dbReference type="Ensembl" id="ENST00000643875.1">
    <molecule id="Q92574-1"/>
    <property type="protein sequence ID" value="ENSP00000495158.1"/>
    <property type="gene ID" value="ENSG00000165699.16"/>
</dbReference>
<dbReference type="Ensembl" id="ENST00000646440.2">
    <molecule id="Q92574-1"/>
    <property type="protein sequence ID" value="ENSP00000495830.2"/>
    <property type="gene ID" value="ENSG00000165699.16"/>
</dbReference>
<dbReference type="Ensembl" id="ENST00000646625.1">
    <molecule id="Q92574-1"/>
    <property type="protein sequence ID" value="ENSP00000496263.1"/>
    <property type="gene ID" value="ENSG00000165699.16"/>
</dbReference>
<dbReference type="GeneID" id="7248"/>
<dbReference type="KEGG" id="hsa:7248"/>
<dbReference type="MANE-Select" id="ENST00000298552.9">
    <property type="protein sequence ID" value="ENSP00000298552.3"/>
    <property type="RefSeq nucleotide sequence ID" value="NM_000368.5"/>
    <property type="RefSeq protein sequence ID" value="NP_000359.1"/>
</dbReference>
<dbReference type="UCSC" id="uc064wss.1">
    <molecule id="Q92574-1"/>
    <property type="organism name" value="human"/>
</dbReference>
<dbReference type="AGR" id="HGNC:12362"/>
<dbReference type="CTD" id="7248"/>
<dbReference type="DisGeNET" id="7248"/>
<dbReference type="GeneCards" id="TSC1"/>
<dbReference type="GeneReviews" id="TSC1"/>
<dbReference type="HGNC" id="HGNC:12362">
    <property type="gene designation" value="TSC1"/>
</dbReference>
<dbReference type="HPA" id="ENSG00000165699">
    <property type="expression patterns" value="Low tissue specificity"/>
</dbReference>
<dbReference type="MalaCards" id="TSC1"/>
<dbReference type="MIM" id="191100">
    <property type="type" value="phenotype"/>
</dbReference>
<dbReference type="MIM" id="605284">
    <property type="type" value="gene"/>
</dbReference>
<dbReference type="MIM" id="606690">
    <property type="type" value="phenotype"/>
</dbReference>
<dbReference type="MIM" id="607341">
    <property type="type" value="phenotype"/>
</dbReference>
<dbReference type="neXtProt" id="NX_Q92574"/>
<dbReference type="OpenTargets" id="ENSG00000165699"/>
<dbReference type="Orphanet" id="210159">
    <property type="disease" value="Adult hepatocellular carcinoma"/>
</dbReference>
<dbReference type="Orphanet" id="269008">
    <property type="disease" value="Isolated focal cortical dysplasia type IIb"/>
</dbReference>
<dbReference type="Orphanet" id="538">
    <property type="disease" value="Lymphangioleiomyomatosis"/>
</dbReference>
<dbReference type="Orphanet" id="805">
    <property type="disease" value="Tuberous sclerosis complex"/>
</dbReference>
<dbReference type="PharmGKB" id="PA37034"/>
<dbReference type="VEuPathDB" id="HostDB:ENSG00000165699"/>
<dbReference type="eggNOG" id="ENOG502QQPT">
    <property type="taxonomic scope" value="Eukaryota"/>
</dbReference>
<dbReference type="GeneTree" id="ENSGT00390000014148"/>
<dbReference type="HOGENOM" id="CLU_011546_0_0_1"/>
<dbReference type="InParanoid" id="Q92574"/>
<dbReference type="OMA" id="NRMASYS"/>
<dbReference type="OrthoDB" id="6022054at2759"/>
<dbReference type="PAN-GO" id="Q92574">
    <property type="GO annotations" value="4 GO annotations based on evolutionary models"/>
</dbReference>
<dbReference type="PhylomeDB" id="Q92574"/>
<dbReference type="TreeFam" id="TF325466"/>
<dbReference type="PathwayCommons" id="Q92574"/>
<dbReference type="Reactome" id="R-HSA-1632852">
    <property type="pathway name" value="Macroautophagy"/>
</dbReference>
<dbReference type="Reactome" id="R-HSA-165181">
    <property type="pathway name" value="Inhibition of TSC complex formation by PKB"/>
</dbReference>
<dbReference type="Reactome" id="R-HSA-380972">
    <property type="pathway name" value="Energy dependent regulation of mTOR by LKB1-AMPK"/>
</dbReference>
<dbReference type="Reactome" id="R-HSA-5628897">
    <property type="pathway name" value="TP53 Regulates Metabolic Genes"/>
</dbReference>
<dbReference type="Reactome" id="R-HSA-8854214">
    <property type="pathway name" value="TBC/RABGAPs"/>
</dbReference>
<dbReference type="SABIO-RK" id="Q92574"/>
<dbReference type="SignaLink" id="Q92574"/>
<dbReference type="SIGNOR" id="Q92574"/>
<dbReference type="BioGRID-ORCS" id="7248">
    <property type="hits" value="93 hits in 1187 CRISPR screens"/>
</dbReference>
<dbReference type="CD-CODE" id="8C2F96ED">
    <property type="entry name" value="Centrosome"/>
</dbReference>
<dbReference type="CD-CODE" id="DEE660B4">
    <property type="entry name" value="Stress granule"/>
</dbReference>
<dbReference type="ChiTaRS" id="TSC1">
    <property type="organism name" value="human"/>
</dbReference>
<dbReference type="EvolutionaryTrace" id="Q92574"/>
<dbReference type="GeneWiki" id="TSC1"/>
<dbReference type="GenomeRNAi" id="7248"/>
<dbReference type="Pharos" id="Q92574">
    <property type="development level" value="Tbio"/>
</dbReference>
<dbReference type="PRO" id="PR:Q92574"/>
<dbReference type="Proteomes" id="UP000005640">
    <property type="component" value="Chromosome 9"/>
</dbReference>
<dbReference type="RNAct" id="Q92574">
    <property type="molecule type" value="protein"/>
</dbReference>
<dbReference type="Bgee" id="ENSG00000165699">
    <property type="expression patterns" value="Expressed in substantia nigra pars compacta and 214 other cell types or tissues"/>
</dbReference>
<dbReference type="ExpressionAtlas" id="Q92574">
    <property type="expression patterns" value="baseline and differential"/>
</dbReference>
<dbReference type="GO" id="GO:0005938">
    <property type="term" value="C:cell cortex"/>
    <property type="evidence" value="ECO:0000314"/>
    <property type="project" value="UniProtKB"/>
</dbReference>
<dbReference type="GO" id="GO:0036064">
    <property type="term" value="C:ciliary basal body"/>
    <property type="evidence" value="ECO:0000314"/>
    <property type="project" value="HPA"/>
</dbReference>
<dbReference type="GO" id="GO:0005737">
    <property type="term" value="C:cytoplasm"/>
    <property type="evidence" value="ECO:0000314"/>
    <property type="project" value="UniProtKB"/>
</dbReference>
<dbReference type="GO" id="GO:0005829">
    <property type="term" value="C:cytosol"/>
    <property type="evidence" value="ECO:0000314"/>
    <property type="project" value="HPA"/>
</dbReference>
<dbReference type="GO" id="GO:0030027">
    <property type="term" value="C:lamellipodium"/>
    <property type="evidence" value="ECO:0000314"/>
    <property type="project" value="UniProtKB"/>
</dbReference>
<dbReference type="GO" id="GO:0005811">
    <property type="term" value="C:lipid droplet"/>
    <property type="evidence" value="ECO:0000314"/>
    <property type="project" value="HPA"/>
</dbReference>
<dbReference type="GO" id="GO:0005765">
    <property type="term" value="C:lysosomal membrane"/>
    <property type="evidence" value="ECO:0000314"/>
    <property type="project" value="UniProtKB"/>
</dbReference>
<dbReference type="GO" id="GO:0016020">
    <property type="term" value="C:membrane"/>
    <property type="evidence" value="ECO:0000314"/>
    <property type="project" value="UniProtKB"/>
</dbReference>
<dbReference type="GO" id="GO:0005634">
    <property type="term" value="C:nucleus"/>
    <property type="evidence" value="ECO:0000250"/>
    <property type="project" value="ParkinsonsUK-UCL"/>
</dbReference>
<dbReference type="GO" id="GO:0048471">
    <property type="term" value="C:perinuclear region of cytoplasm"/>
    <property type="evidence" value="ECO:0000250"/>
    <property type="project" value="ParkinsonsUK-UCL"/>
</dbReference>
<dbReference type="GO" id="GO:0005886">
    <property type="term" value="C:plasma membrane"/>
    <property type="evidence" value="ECO:0000304"/>
    <property type="project" value="Reactome"/>
</dbReference>
<dbReference type="GO" id="GO:0014069">
    <property type="term" value="C:postsynaptic density"/>
    <property type="evidence" value="ECO:0007669"/>
    <property type="project" value="Ensembl"/>
</dbReference>
<dbReference type="GO" id="GO:0101031">
    <property type="term" value="C:protein folding chaperone complex"/>
    <property type="evidence" value="ECO:0000314"/>
    <property type="project" value="UniProtKB"/>
</dbReference>
<dbReference type="GO" id="GO:0032991">
    <property type="term" value="C:protein-containing complex"/>
    <property type="evidence" value="ECO:0000314"/>
    <property type="project" value="UniProtKB"/>
</dbReference>
<dbReference type="GO" id="GO:0033596">
    <property type="term" value="C:TSC1-TSC2 complex"/>
    <property type="evidence" value="ECO:0000314"/>
    <property type="project" value="UniProtKB"/>
</dbReference>
<dbReference type="GO" id="GO:0042030">
    <property type="term" value="F:ATPase inhibitor activity"/>
    <property type="evidence" value="ECO:0000314"/>
    <property type="project" value="UniProtKB"/>
</dbReference>
<dbReference type="GO" id="GO:0030544">
    <property type="term" value="F:Hsp70 protein binding"/>
    <property type="evidence" value="ECO:0000314"/>
    <property type="project" value="UniProtKB"/>
</dbReference>
<dbReference type="GO" id="GO:0051879">
    <property type="term" value="F:Hsp90 protein binding"/>
    <property type="evidence" value="ECO:0000353"/>
    <property type="project" value="UniProtKB"/>
</dbReference>
<dbReference type="GO" id="GO:0044183">
    <property type="term" value="F:protein folding chaperone"/>
    <property type="evidence" value="ECO:0000314"/>
    <property type="project" value="UniProt"/>
</dbReference>
<dbReference type="GO" id="GO:0051087">
    <property type="term" value="F:protein-folding chaperone binding"/>
    <property type="evidence" value="ECO:0000353"/>
    <property type="project" value="UniProtKB"/>
</dbReference>
<dbReference type="GO" id="GO:0090630">
    <property type="term" value="P:activation of GTPase activity"/>
    <property type="evidence" value="ECO:0000314"/>
    <property type="project" value="UniProtKB"/>
</dbReference>
<dbReference type="GO" id="GO:0002250">
    <property type="term" value="P:adaptive immune response"/>
    <property type="evidence" value="ECO:0007669"/>
    <property type="project" value="Ensembl"/>
</dbReference>
<dbReference type="GO" id="GO:0008344">
    <property type="term" value="P:adult locomotory behavior"/>
    <property type="evidence" value="ECO:0000250"/>
    <property type="project" value="ParkinsonsUK-UCL"/>
</dbReference>
<dbReference type="GO" id="GO:0008306">
    <property type="term" value="P:associative learning"/>
    <property type="evidence" value="ECO:0007669"/>
    <property type="project" value="Ensembl"/>
</dbReference>
<dbReference type="GO" id="GO:0055007">
    <property type="term" value="P:cardiac muscle cell differentiation"/>
    <property type="evidence" value="ECO:0007669"/>
    <property type="project" value="Ensembl"/>
</dbReference>
<dbReference type="GO" id="GO:0008283">
    <property type="term" value="P:cell population proliferation"/>
    <property type="evidence" value="ECO:0007669"/>
    <property type="project" value="Ensembl"/>
</dbReference>
<dbReference type="GO" id="GO:0030030">
    <property type="term" value="P:cell projection organization"/>
    <property type="evidence" value="ECO:0007669"/>
    <property type="project" value="Ensembl"/>
</dbReference>
<dbReference type="GO" id="GO:0007160">
    <property type="term" value="P:cell-matrix adhesion"/>
    <property type="evidence" value="ECO:0000315"/>
    <property type="project" value="UniProtKB"/>
</dbReference>
<dbReference type="GO" id="GO:0036294">
    <property type="term" value="P:cellular response to decreased oxygen levels"/>
    <property type="evidence" value="ECO:0000250"/>
    <property type="project" value="ParkinsonsUK-UCL"/>
</dbReference>
<dbReference type="GO" id="GO:0009267">
    <property type="term" value="P:cellular response to starvation"/>
    <property type="evidence" value="ECO:0000314"/>
    <property type="project" value="UniProtKB"/>
</dbReference>
<dbReference type="GO" id="GO:0021987">
    <property type="term" value="P:cerebral cortex development"/>
    <property type="evidence" value="ECO:0007669"/>
    <property type="project" value="Ensembl"/>
</dbReference>
<dbReference type="GO" id="GO:0046323">
    <property type="term" value="P:D-glucose import"/>
    <property type="evidence" value="ECO:0007669"/>
    <property type="project" value="Ensembl"/>
</dbReference>
<dbReference type="GO" id="GO:0021766">
    <property type="term" value="P:hippocampus development"/>
    <property type="evidence" value="ECO:0007669"/>
    <property type="project" value="Ensembl"/>
</dbReference>
<dbReference type="GO" id="GO:0001822">
    <property type="term" value="P:kidney development"/>
    <property type="evidence" value="ECO:0007669"/>
    <property type="project" value="Ensembl"/>
</dbReference>
<dbReference type="GO" id="GO:0043379">
    <property type="term" value="P:memory T cell differentiation"/>
    <property type="evidence" value="ECO:0007669"/>
    <property type="project" value="Ensembl"/>
</dbReference>
<dbReference type="GO" id="GO:0042552">
    <property type="term" value="P:myelination"/>
    <property type="evidence" value="ECO:0007669"/>
    <property type="project" value="Ensembl"/>
</dbReference>
<dbReference type="GO" id="GO:0032780">
    <property type="term" value="P:negative regulation of ATP-dependent activity"/>
    <property type="evidence" value="ECO:0000314"/>
    <property type="project" value="UniProtKB"/>
</dbReference>
<dbReference type="GO" id="GO:0008285">
    <property type="term" value="P:negative regulation of cell population proliferation"/>
    <property type="evidence" value="ECO:0000315"/>
    <property type="project" value="UniProtKB"/>
</dbReference>
<dbReference type="GO" id="GO:0045792">
    <property type="term" value="P:negative regulation of cell size"/>
    <property type="evidence" value="ECO:0007669"/>
    <property type="project" value="Ensembl"/>
</dbReference>
<dbReference type="GO" id="GO:0016242">
    <property type="term" value="P:negative regulation of macroautophagy"/>
    <property type="evidence" value="ECO:0000250"/>
    <property type="project" value="ParkinsonsUK-UCL"/>
</dbReference>
<dbReference type="GO" id="GO:0032007">
    <property type="term" value="P:negative regulation of TOR signaling"/>
    <property type="evidence" value="ECO:0000314"/>
    <property type="project" value="ComplexPortal"/>
</dbReference>
<dbReference type="GO" id="GO:1904262">
    <property type="term" value="P:negative regulation of TORC1 signaling"/>
    <property type="evidence" value="ECO:0000314"/>
    <property type="project" value="UniProtKB"/>
</dbReference>
<dbReference type="GO" id="GO:0001843">
    <property type="term" value="P:neural tube closure"/>
    <property type="evidence" value="ECO:0007669"/>
    <property type="project" value="Ensembl"/>
</dbReference>
<dbReference type="GO" id="GO:0051894">
    <property type="term" value="P:positive regulation of focal adhesion assembly"/>
    <property type="evidence" value="ECO:0000314"/>
    <property type="project" value="UniProtKB"/>
</dbReference>
<dbReference type="GO" id="GO:0006813">
    <property type="term" value="P:potassium ion transport"/>
    <property type="evidence" value="ECO:0007669"/>
    <property type="project" value="Ensembl"/>
</dbReference>
<dbReference type="GO" id="GO:0050821">
    <property type="term" value="P:protein stabilization"/>
    <property type="evidence" value="ECO:0000314"/>
    <property type="project" value="UniProtKB"/>
</dbReference>
<dbReference type="GO" id="GO:0051726">
    <property type="term" value="P:regulation of cell cycle"/>
    <property type="evidence" value="ECO:0000318"/>
    <property type="project" value="GO_Central"/>
</dbReference>
<dbReference type="GO" id="GO:0001952">
    <property type="term" value="P:regulation of cell-matrix adhesion"/>
    <property type="evidence" value="ECO:0000315"/>
    <property type="project" value="UniProtKB"/>
</dbReference>
<dbReference type="GO" id="GO:0051492">
    <property type="term" value="P:regulation of stress fiber assembly"/>
    <property type="evidence" value="ECO:0000314"/>
    <property type="project" value="UniProtKB"/>
</dbReference>
<dbReference type="GO" id="GO:0032868">
    <property type="term" value="P:response to insulin"/>
    <property type="evidence" value="ECO:0000314"/>
    <property type="project" value="UniProtKB"/>
</dbReference>
<dbReference type="GO" id="GO:0050808">
    <property type="term" value="P:synapse organization"/>
    <property type="evidence" value="ECO:0007669"/>
    <property type="project" value="Ensembl"/>
</dbReference>
<dbReference type="DisProt" id="DP02744"/>
<dbReference type="InterPro" id="IPR007483">
    <property type="entry name" value="Hamartin"/>
</dbReference>
<dbReference type="PANTHER" id="PTHR15154">
    <property type="entry name" value="HAMARTIN"/>
    <property type="match status" value="1"/>
</dbReference>
<dbReference type="PANTHER" id="PTHR15154:SF2">
    <property type="entry name" value="HAMARTIN"/>
    <property type="match status" value="1"/>
</dbReference>
<dbReference type="Pfam" id="PF04388">
    <property type="entry name" value="Hamartin"/>
    <property type="match status" value="1"/>
</dbReference>
<feature type="chain" id="PRO_0000065651" description="Hamartin">
    <location>
        <begin position="1"/>
        <end position="1164"/>
    </location>
</feature>
<feature type="region of interest" description="Mediates interaction with WDR45B" evidence="29">
    <location>
        <begin position="403"/>
        <end position="787"/>
    </location>
</feature>
<feature type="region of interest" description="Disordered" evidence="3">
    <location>
        <begin position="439"/>
        <end position="571"/>
    </location>
</feature>
<feature type="region of interest" description="Disordered" evidence="3">
    <location>
        <begin position="1006"/>
        <end position="1085"/>
    </location>
</feature>
<feature type="region of interest" description="Disordered" evidence="3">
    <location>
        <begin position="1131"/>
        <end position="1164"/>
    </location>
</feature>
<feature type="coiled-coil region" evidence="2">
    <location>
        <begin position="721"/>
        <end position="997"/>
    </location>
</feature>
<feature type="compositionally biased region" description="Basic and acidic residues" evidence="3">
    <location>
        <begin position="474"/>
        <end position="487"/>
    </location>
</feature>
<feature type="compositionally biased region" description="Polar residues" evidence="3">
    <location>
        <begin position="513"/>
        <end position="530"/>
    </location>
</feature>
<feature type="compositionally biased region" description="Basic and acidic residues" evidence="3">
    <location>
        <begin position="1007"/>
        <end position="1020"/>
    </location>
</feature>
<feature type="compositionally biased region" description="Polar residues" evidence="3">
    <location>
        <begin position="1073"/>
        <end position="1085"/>
    </location>
</feature>
<feature type="compositionally biased region" description="Basic and acidic residues" evidence="3">
    <location>
        <begin position="1155"/>
        <end position="1164"/>
    </location>
</feature>
<feature type="modified residue" description="Phosphoserine" evidence="47">
    <location>
        <position position="487"/>
    </location>
</feature>
<feature type="modified residue" description="Phosphoserine" evidence="17 45 46 47">
    <location>
        <position position="505"/>
    </location>
</feature>
<feature type="modified residue" description="Phosphoserine" evidence="45">
    <location>
        <position position="511"/>
    </location>
</feature>
<feature type="modified residue" description="Phosphoserine" evidence="47">
    <location>
        <position position="521"/>
    </location>
</feature>
<feature type="modified residue" description="Phosphoserine" evidence="45">
    <location>
        <position position="598"/>
    </location>
</feature>
<feature type="modified residue" description="Phosphoserine" evidence="48">
    <location>
        <position position="1100"/>
    </location>
</feature>
<feature type="cross-link" description="Glycyl lysine isopeptide (Lys-Gly) (interchain with G-Cter in ubiquitin)" evidence="31">
    <location>
        <position position="30"/>
    </location>
</feature>
<feature type="splice variant" id="VSP_042890" description="In isoform 2." evidence="38">
    <location>
        <begin position="70"/>
        <end position="120"/>
    </location>
</feature>
<feature type="sequence variant" id="VAR_078844" description="In FCORD2; somatic mutation; decreased interaction with TSC2; decreased function in negative regulation of TOR signaling; dbSNP:rs749030456." evidence="27">
    <original>R</original>
    <variation>W</variation>
    <location>
        <position position="22"/>
    </location>
</feature>
<feature type="sequence variant" id="VAR_009397" description="In TSC1; uncertain significance; dbSNP:rs118203342.">
    <original>E</original>
    <variation>D</variation>
    <location>
        <position position="51"/>
    </location>
</feature>
<feature type="sequence variant" id="VAR_070636" description="In TSC1; uncertain significance; reduced expression; altered subcellular localization; reduced inhibition of TORC1 signaling; dbSNP:rs118203345." evidence="23">
    <original>L</original>
    <variation>R</variation>
    <location>
        <position position="61"/>
    </location>
</feature>
<feature type="sequence variant" id="VAR_054386" description="In a bladder tumor; somatic mutation; reduced stability; does not affect interaction with TSC2; dbSNP:rs118203347." evidence="21">
    <original>H</original>
    <variation>R</variation>
    <location>
        <position position="68"/>
    </location>
</feature>
<feature type="sequence variant" id="VAR_054387" description="In TSC1; dbSNP:rs118203354." evidence="6">
    <original>L</original>
    <variation>P</variation>
    <location>
        <position position="72"/>
    </location>
</feature>
<feature type="sequence variant" id="VAR_070637" description="In TSC1; reduced expression; altered subcellular localization; reduced interaction with TSC2; reduced inhibition of TORC1 signaling; dbSNP:rs118203368." evidence="22 23 30">
    <original>L</original>
    <variation>P</variation>
    <location>
        <position position="117"/>
    </location>
</feature>
<feature type="sequence variant" id="VAR_070638" description="In TSC1; uncertain significance; no effect on expression; no effect on subcellular localization; no effect on inhibition of TORC1 signaling; dbSNP:rs397514843." evidence="23">
    <original>V</original>
    <variation>I</variation>
    <location>
        <position position="126"/>
    </location>
</feature>
<feature type="sequence variant" id="VAR_070639" description="In TSC1; reduced expression; reduced inhibition of TORC1 signaling." evidence="22">
    <location>
        <position position="128"/>
    </location>
</feature>
<feature type="sequence variant" id="VAR_070640" description="In TSC1; uncertain significance; reduced expression; altered subcellular localization; reduced inhibition of TORC1 signaling; dbSNP:rs397514784." evidence="23">
    <original>G</original>
    <variation>D</variation>
    <location>
        <position position="132"/>
    </location>
</feature>
<feature type="sequence variant" id="VAR_070641" description="In TSC1; uncertain significance; no effect on expression; no effect on subcellular localization; no effect on inhibition of TORC1 signaling; dbSNP:rs118203381." evidence="23">
    <original>V</original>
    <variation>I</variation>
    <location>
        <position position="133"/>
    </location>
</feature>
<feature type="sequence variant" id="VAR_054388" description="In a bladder tumor; somatic mutation; reduced stability; does not affect interaction with TSC2; dbSNP:rs118203385." evidence="21">
    <original>F</original>
    <variation>C</variation>
    <location>
        <position position="158"/>
    </location>
</feature>
<feature type="sequence variant" id="VAR_070642" description="Found in a patient suspected of having tuberous sclerosis; uncertain significance; reduced expression; altered subcellular localization; reduced inhibition of TORC1 signaling; dbSNP:rs118203385." evidence="23">
    <original>F</original>
    <variation>S</variation>
    <location>
        <position position="158"/>
    </location>
</feature>
<feature type="sequence variant" id="VAR_078845" description="In TSC1." evidence="11">
    <location>
        <begin position="165"/>
        <end position="1164"/>
    </location>
</feature>
<feature type="sequence variant" id="VAR_070643" description="In TSC1; reduced expression; reduced inhibition of TORC1 signaling; dbSNP:rs118203396." evidence="22">
    <original>L</original>
    <variation>P</variation>
    <location>
        <position position="180"/>
    </location>
</feature>
<feature type="sequence variant" id="VAR_009398">
    <original>R</original>
    <variation>S</variation>
    <location>
        <position position="190"/>
    </location>
</feature>
<feature type="sequence variant" id="VAR_009399" description="In TSC1; reduced expression; reduced inhibition of TORC1 signaling; dbSNP:rs118203403." evidence="22">
    <original>L</original>
    <variation>H</variation>
    <location>
        <position position="191"/>
    </location>
</feature>
<feature type="sequence variant" id="VAR_009400" description="In TSC1; reduced expression; altered subcellular localization; reduced interaction with TSC2; reduced inhibition of TORC1 signaling." evidence="22">
    <original>NF</original>
    <variation>I</variation>
    <location>
        <begin position="198"/>
        <end position="199"/>
    </location>
</feature>
<feature type="sequence variant" id="VAR_078846" description="In FCORD2; somatic mutation; decreased interaction with TSC2; decreased function in negative regulation of TOR signaling; dbSNP:rs1060505021." evidence="27">
    <original>R</original>
    <variation>C</variation>
    <location>
        <position position="204"/>
    </location>
</feature>
<feature type="sequence variant" id="VAR_070644" description="Found in a patient suspected of having tuberous sclerosis; reduced expression; altered subcellular localization; reduced inhibition of TORC1 signaling; dbSNP:rs397514834." evidence="23">
    <original>R</original>
    <variation>P</variation>
    <location>
        <position position="204"/>
    </location>
</feature>
<feature type="sequence variant" id="VAR_054389" description="In a bladder tumor; somatic mutation; reduced stability; does not affect interaction with TSC2." evidence="21">
    <original>H</original>
    <variation>D</variation>
    <location>
        <position position="206"/>
    </location>
</feature>
<feature type="sequence variant" id="VAR_054390" description="In a bladder tumor; diffuse punctate cytoplasmic distribution in aminoacid-starved conditions; does not affect interaction with TSC2; dbSNP:rs1323541164." evidence="21">
    <original>F</original>
    <variation>L</variation>
    <location>
        <position position="216"/>
    </location>
</feature>
<feature type="sequence variant" id="VAR_009401" description="In TSC1; reduced expression; reduced inhibition of TORC1 signaling; dbSNP:rs118203426." evidence="22">
    <original>M</original>
    <variation>R</variation>
    <location>
        <position position="224"/>
    </location>
</feature>
<feature type="sequence variant" id="VAR_070645" description="In TSC1; uncertain significance; no effect on expression; no effect on inhibition of TORC1 signaling; dbSNP:rs118203436." evidence="22">
    <original>R</original>
    <variation>K</variation>
    <location>
        <position position="246"/>
    </location>
</feature>
<feature type="sequence variant" id="VAR_070646" description="In TSC1; uncertain significance; no effect on expression; no effect on inhibition of TORC1 signaling; dbSNP:rs118203468." evidence="22">
    <original>G</original>
    <variation>R</variation>
    <location>
        <position position="305"/>
    </location>
</feature>
<feature type="sequence variant" id="VAR_070647" description="In TSC1; uncertain significance; no effect on expression; no effect on inhibition of TORC1 signaling; dbSNP:rs118203468." evidence="22">
    <original>G</original>
    <variation>W</variation>
    <location>
        <position position="305"/>
    </location>
</feature>
<feature type="sequence variant" id="VAR_009402" description="In dbSNP:rs1073123." evidence="5 7 9 34 37">
    <original>M</original>
    <variation>T</variation>
    <location>
        <position position="322"/>
    </location>
</feature>
<feature type="sequence variant" id="VAR_070648" description="In TSC1; uncertain significance; no effect on expression; no effect on subcellular localization; no effect on inhibition of TORC1 signaling; dbSNP:rs397514808." evidence="23">
    <original>R</original>
    <variation>Q</variation>
    <location>
        <position position="336"/>
    </location>
</feature>
<feature type="sequence variant" id="VAR_070649" description="In TSC1; uncertain significance; no effect on expression; no effect on subcellular localization; no effect on inhibition of TORC1 signaling; dbSNP:rs397514864." evidence="23">
    <original>P</original>
    <variation>S</variation>
    <location>
        <position position="362"/>
    </location>
</feature>
<feature type="sequence variant" id="VAR_070650" description="In TSC1; uncertain significance; no effect on expression; no effect on subcellular localization; no effect on inhibition of TORC1 signaling; dbSNP:rs397514840." evidence="23">
    <original>L</original>
    <variation>I</variation>
    <location>
        <position position="411"/>
    </location>
</feature>
<feature type="sequence variant" id="VAR_009403" description="In TSC1; uncertain significance; does not affect interaction with TSC2; dbSNP:rs77464996." evidence="7 9 21">
    <original>T</original>
    <variation>I</variation>
    <location>
        <position position="417"/>
    </location>
</feature>
<feature type="sequence variant" id="VAR_070651" description="No effect on expression; no effect on subcellular localization; no effect on inhibition of TORC1 signaling; dbSNP:rs118203518." evidence="23">
    <original>P</original>
    <variation>S</variation>
    <location>
        <position position="448"/>
    </location>
</feature>
<feature type="sequence variant" id="VAR_054391" description="In TSC1; dbSNP:rs118203538." evidence="10">
    <original>R</original>
    <variation>Q</variation>
    <location>
        <position position="500"/>
    </location>
</feature>
<feature type="sequence variant" id="VAR_070652" description="No effect on expression; no effect on inhibition of TORC1 signaling; dbSNP:rs118203543." evidence="22">
    <original>R</original>
    <variation>Q</variation>
    <location>
        <position position="509"/>
    </location>
</feature>
<feature type="sequence variant" id="VAR_070653" description="In TSC1; uncertain significance; no effect on expression; no effect on subcellular localization; no effect on inhibition of TORC1 signaling; dbSNP:rs118203548." evidence="23">
    <original>A</original>
    <variation>P</variation>
    <location>
        <position position="523"/>
    </location>
</feature>
<feature type="sequence variant" id="VAR_070654" description="No effect on expression; no effect on subcellular localization; no effect on inhibition of TORC1 signaling; dbSNP:rs397514880." evidence="23">
    <original>A</original>
    <variation>V</variation>
    <location>
        <position position="567"/>
    </location>
</feature>
<feature type="sequence variant" id="VAR_009404" description="In dbSNP:rs118203571." evidence="9">
    <original>E</original>
    <variation>D</variation>
    <location>
        <position position="577"/>
    </location>
</feature>
<feature type="sequence variant" id="VAR_009405" description="In TSC1.">
    <original>CKIP</original>
    <variation>S</variation>
    <location>
        <begin position="586"/>
        <end position="589"/>
    </location>
</feature>
<feature type="sequence variant" id="VAR_009406" description="In dbSNP:rs118203576." evidence="33 37">
    <original>K</original>
    <variation>R</variation>
    <location>
        <position position="587"/>
    </location>
</feature>
<feature type="sequence variant" id="VAR_009407" description="In TSC1; dbSNP:rs75820036." evidence="7">
    <original>Q</original>
    <variation>E</variation>
    <location>
        <position position="654"/>
    </location>
</feature>
<feature type="sequence variant" id="VAR_070655" description="In TSC1; uncertain significance; no effect on expression; no effect on subcellular localization; no effect on inhibition of TORC1 signaling; dbSNP:rs397514800." evidence="23">
    <original>D</original>
    <variation>H</variation>
    <location>
        <position position="693"/>
    </location>
</feature>
<feature type="sequence variant" id="VAR_070656" description="In TSC1; uncertain significance; no effect on expression; no effect on subcellular localization; no effect on inhibition of TORC1 signaling; dbSNP:rs397514802." evidence="23">
    <original>L</original>
    <variation>R</variation>
    <location>
        <position position="698"/>
    </location>
</feature>
<feature type="sequence variant" id="VAR_070657" description="In TSC1; uncertain significance; no effect on expression; no effect on subcellular localization; no effect on inhibition of TORC1 signaling; dbSNP:rs118203639." evidence="23">
    <original>Q</original>
    <variation>H</variation>
    <location>
        <position position="701"/>
    </location>
</feature>
<feature type="sequence variant" id="VAR_009408" description="In TSC1; dbSNP:rs118203655." evidence="34">
    <original>A</original>
    <variation>E</variation>
    <location>
        <position position="726"/>
    </location>
</feature>
<feature type="sequence variant" id="VAR_009409" description="In dbSNP:rs118203657." evidence="5 12 34 37">
    <original>H</original>
    <variation>Y</variation>
    <location>
        <position position="732"/>
    </location>
</feature>
<feature type="sequence variant" id="VAR_070658" description="In TSC1; uncertain significance; no effect on expression; no effect on subcellular localization; no effect on inhibition of TORC1 signaling; dbSNP:rs118203670." evidence="23">
    <original>N</original>
    <variation>S</variation>
    <location>
        <position position="762"/>
    </location>
</feature>
<feature type="sequence variant" id="VAR_009410" description="In dbSNP:rs118203692." evidence="5">
    <original>E</original>
    <variation>Q</variation>
    <location>
        <position position="809"/>
    </location>
</feature>
<feature type="sequence variant" id="VAR_070659" description="In TSC1; uncertain significance; no effect on expression; no effect on subcellular localization; no effect on inhibition of TORC1 signaling; dbSNP:rs397514814." evidence="23">
    <original>R</original>
    <variation>G</variation>
    <location>
        <position position="811"/>
    </location>
</feature>
<feature type="sequence variant" id="VAR_009411" description="In dbSNP:rs118203699." evidence="9">
    <original>S</original>
    <variation>R</variation>
    <location>
        <position position="829"/>
    </location>
</feature>
<feature type="sequence variant" id="VAR_070660" description="In TSC1; uncertain significance; no effect on expression; no effect on subcellular localization; no effect on inhibition of TORC1 signaling; dbSNP:rs118203721." evidence="23">
    <original>A</original>
    <variation>T</variation>
    <location>
        <position position="883"/>
    </location>
</feature>
<feature type="sequence variant" id="VAR_009412" description="In TSC1; dbSNP:rs76801599." evidence="7">
    <original>T</original>
    <variation>S</variation>
    <location>
        <position position="899"/>
    </location>
</feature>
<feature type="sequence variant" id="VAR_070661" description="In TSC1; uncertain significance; no effect on expression; no effect on subcellular localization; no effect on inhibition of TORC1 signaling; dbSNP:rs397514859." evidence="23">
    <original>L</original>
    <variation>V</variation>
    <location>
        <position position="978"/>
    </location>
</feature>
<feature type="sequence variant" id="VAR_009413" description="No effect on expression; no effect on inhibition of TORC1 signaling; dbSNP:rs118203742." evidence="22 34 37">
    <original>G</original>
    <variation>S</variation>
    <location>
        <position position="1035"/>
    </location>
</feature>
<feature type="sequence variant" id="VAR_070662" description="In TSC1; uncertain significance; no effect on expression; no effect on subcellular localization; no effect on inhibition of TORC1 signaling." evidence="23">
    <location>
        <position position="1043"/>
    </location>
</feature>
<feature type="sequence variant" id="VAR_070663" description="No effect on expression; no effect on inhibition of TORC1 signaling; dbSNP:rs118203750." evidence="22">
    <original>R</original>
    <variation>H</variation>
    <location>
        <position position="1097"/>
    </location>
</feature>
<feature type="sequence variant" id="VAR_009414" description="In dbSNP:rs118203753." evidence="37">
    <original>G</original>
    <variation>S</variation>
    <location>
        <position position="1108"/>
    </location>
</feature>
<feature type="sequence variant" id="VAR_070664" description="In TSC1; uncertain significance; no effect on expression; no effect on subcellular localization; no effect on inhibition of TORC1 signaling; dbSNP:rs397514806." evidence="23">
    <original>D</original>
    <variation>Y</variation>
    <location>
        <position position="1146"/>
    </location>
</feature>
<feature type="mutagenesis site" description="Severe reduction of PELI1-induced ubiquitination." evidence="31">
    <original>K</original>
    <variation>R</variation>
    <location>
        <position position="30"/>
    </location>
</feature>
<feature type="mutagenesis site" description="Moderate reduction of PELI1-induced ubiquitination." evidence="31">
    <original>K</original>
    <variation>R</variation>
    <location>
        <position position="632"/>
    </location>
</feature>
<feature type="mutagenesis site" description="Abolished interaction with TBC1D7; when associated with 965-A--A-969." evidence="26">
    <original>L</original>
    <variation>A</variation>
    <location>
        <position position="941"/>
    </location>
</feature>
<feature type="mutagenesis site" description="Reduced interaction with TBC1D7 without affecting interaction with TSC2." evidence="26">
    <original>ITQVFELEI</original>
    <variation>ATQVAELEA</variation>
    <location>
        <begin position="954"/>
        <end position="962"/>
    </location>
</feature>
<feature type="mutagenesis site" description="Abolished interaction with TBC1D7." evidence="26">
    <original>I</original>
    <variation>A</variation>
    <location>
        <position position="954"/>
    </location>
</feature>
<feature type="mutagenesis site" description="Abolished interaction with TBC1D7." evidence="26">
    <original>F</original>
    <variation>A</variation>
    <location>
        <position position="958"/>
    </location>
</feature>
<feature type="mutagenesis site" description="Abolished interaction with TBC1D7." evidence="26">
    <original>I</original>
    <variation>A</variation>
    <location>
        <position position="962"/>
    </location>
</feature>
<feature type="mutagenesis site" description="Slightly reduced interaction with TBC1D7 without affecting interaction with TSC2." evidence="26">
    <original>LYGRL</original>
    <variation>AAGRA</variation>
    <location>
        <begin position="965"/>
        <end position="969"/>
    </location>
</feature>
<feature type="helix" evidence="50">
    <location>
        <begin position="7"/>
        <end position="12"/>
    </location>
</feature>
<feature type="turn" evidence="50">
    <location>
        <begin position="13"/>
        <end position="15"/>
    </location>
</feature>
<feature type="helix" evidence="50">
    <location>
        <begin position="19"/>
        <end position="35"/>
    </location>
</feature>
<feature type="helix" evidence="50">
    <location>
        <begin position="40"/>
        <end position="52"/>
    </location>
</feature>
<feature type="helix" evidence="50">
    <location>
        <begin position="55"/>
        <end position="62"/>
    </location>
</feature>
<feature type="helix" evidence="50">
    <location>
        <begin position="68"/>
        <end position="81"/>
    </location>
</feature>
<feature type="helix" evidence="50">
    <location>
        <begin position="86"/>
        <end position="98"/>
    </location>
</feature>
<feature type="helix" evidence="50">
    <location>
        <begin position="102"/>
        <end position="108"/>
    </location>
</feature>
<feature type="helix" evidence="50">
    <location>
        <begin position="112"/>
        <end position="121"/>
    </location>
</feature>
<feature type="helix" evidence="50">
    <location>
        <begin position="126"/>
        <end position="139"/>
    </location>
</feature>
<feature type="turn" evidence="50">
    <location>
        <begin position="140"/>
        <end position="142"/>
    </location>
</feature>
<feature type="helix" evidence="50">
    <location>
        <begin position="144"/>
        <end position="146"/>
    </location>
</feature>
<feature type="helix" evidence="50">
    <location>
        <begin position="147"/>
        <end position="167"/>
    </location>
</feature>
<feature type="helix" evidence="50">
    <location>
        <begin position="174"/>
        <end position="194"/>
    </location>
</feature>
<feature type="helix" evidence="50">
    <location>
        <begin position="196"/>
        <end position="207"/>
    </location>
</feature>
<feature type="turn" evidence="50">
    <location>
        <begin position="210"/>
        <end position="212"/>
    </location>
</feature>
<feature type="helix" evidence="50">
    <location>
        <begin position="213"/>
        <end position="224"/>
    </location>
</feature>
<feature type="helix" evidence="50">
    <location>
        <begin position="232"/>
        <end position="235"/>
    </location>
</feature>
<feature type="helix" evidence="50">
    <location>
        <begin position="238"/>
        <end position="242"/>
    </location>
</feature>
<feature type="helix" evidence="50">
    <location>
        <begin position="244"/>
        <end position="247"/>
    </location>
</feature>
<feature type="helix" evidence="50">
    <location>
        <begin position="252"/>
        <end position="260"/>
    </location>
</feature>
<feature type="turn" evidence="50">
    <location>
        <begin position="266"/>
        <end position="268"/>
    </location>
</feature>
<feature type="helix" evidence="50">
    <location>
        <begin position="605"/>
        <end position="611"/>
    </location>
</feature>
<feature type="helix" evidence="50">
    <location>
        <begin position="613"/>
        <end position="619"/>
    </location>
</feature>
<feature type="helix" evidence="50">
    <location>
        <begin position="623"/>
        <end position="631"/>
    </location>
</feature>
<feature type="helix" evidence="50">
    <location>
        <begin position="646"/>
        <end position="651"/>
    </location>
</feature>
<feature type="helix" evidence="50">
    <location>
        <begin position="656"/>
        <end position="662"/>
    </location>
</feature>
<feature type="strand" evidence="50">
    <location>
        <begin position="666"/>
        <end position="668"/>
    </location>
</feature>
<feature type="helix" evidence="50">
    <location>
        <begin position="669"/>
        <end position="673"/>
    </location>
</feature>
<feature type="helix" evidence="50">
    <location>
        <begin position="676"/>
        <end position="678"/>
    </location>
</feature>
<feature type="helix" evidence="50">
    <location>
        <begin position="685"/>
        <end position="793"/>
    </location>
</feature>
<feature type="helix" evidence="50">
    <location>
        <begin position="795"/>
        <end position="866"/>
    </location>
</feature>
<feature type="helix" evidence="50">
    <location>
        <begin position="867"/>
        <end position="873"/>
    </location>
</feature>
<feature type="helix" evidence="49">
    <location>
        <begin position="941"/>
        <end position="971"/>
    </location>
</feature>
<feature type="helix" evidence="49">
    <location>
        <begin position="975"/>
        <end position="991"/>
    </location>
</feature>
<protein>
    <recommendedName>
        <fullName evidence="41">Hamartin</fullName>
    </recommendedName>
    <alternativeName>
        <fullName evidence="40">Tuberous sclerosis 1 protein</fullName>
    </alternativeName>
</protein>
<reference key="1">
    <citation type="journal article" date="1997" name="Science">
        <title>Identification of the tuberous sclerosis gene TSC1 on chromosome 9q34.</title>
        <authorList>
            <person name="van Slegtenhorst M.A."/>
            <person name="de Hoogt R."/>
            <person name="Hermans C."/>
            <person name="Nellist M."/>
            <person name="Janssen B."/>
            <person name="Verhoef S."/>
            <person name="Lindhout D."/>
            <person name="van den Ouweland A.M.W."/>
            <person name="Halley D.J.J."/>
            <person name="Young J."/>
            <person name="Burley M."/>
            <person name="Jeremiah S."/>
            <person name="Woodward K."/>
            <person name="Nahmias J."/>
            <person name="Fox M."/>
            <person name="Ekong R."/>
            <person name="Osborne J."/>
            <person name="Wolfe J."/>
            <person name="Povey S."/>
            <person name="Snell R.G."/>
            <person name="Cheadle J.P."/>
            <person name="Jones A.C."/>
            <person name="Tachataki M."/>
            <person name="Ravine D."/>
            <person name="Sampson J.R."/>
            <person name="Reeve M.P."/>
            <person name="Richardson P."/>
            <person name="Wilmer F."/>
            <person name="Munro C."/>
            <person name="Hawkins T.L."/>
            <person name="Sepp T."/>
            <person name="Ali J.B.M."/>
            <person name="Ward S."/>
            <person name="Green A.J."/>
            <person name="Yates J.R.W."/>
            <person name="Kwiatkowska J."/>
            <person name="Henske E.P."/>
            <person name="Short M.P."/>
            <person name="Haines J.H."/>
            <person name="Jozwiak S."/>
            <person name="Kwiatkowski D.J."/>
        </authorList>
    </citation>
    <scope>NUCLEOTIDE SEQUENCE [MRNA] (ISOFORM 1)</scope>
    <scope>FUNCTION</scope>
    <scope>TISSUE SPECIFICITY</scope>
    <scope>VARIANT ARG-587</scope>
</reference>
<reference key="2">
    <citation type="journal article" date="2004" name="Nat. Genet.">
        <title>Complete sequencing and characterization of 21,243 full-length human cDNAs.</title>
        <authorList>
            <person name="Ota T."/>
            <person name="Suzuki Y."/>
            <person name="Nishikawa T."/>
            <person name="Otsuki T."/>
            <person name="Sugiyama T."/>
            <person name="Irie R."/>
            <person name="Wakamatsu A."/>
            <person name="Hayashi K."/>
            <person name="Sato H."/>
            <person name="Nagai K."/>
            <person name="Kimura K."/>
            <person name="Makita H."/>
            <person name="Sekine M."/>
            <person name="Obayashi M."/>
            <person name="Nishi T."/>
            <person name="Shibahara T."/>
            <person name="Tanaka T."/>
            <person name="Ishii S."/>
            <person name="Yamamoto J."/>
            <person name="Saito K."/>
            <person name="Kawai Y."/>
            <person name="Isono Y."/>
            <person name="Nakamura Y."/>
            <person name="Nagahari K."/>
            <person name="Murakami K."/>
            <person name="Yasuda T."/>
            <person name="Iwayanagi T."/>
            <person name="Wagatsuma M."/>
            <person name="Shiratori A."/>
            <person name="Sudo H."/>
            <person name="Hosoiri T."/>
            <person name="Kaku Y."/>
            <person name="Kodaira H."/>
            <person name="Kondo H."/>
            <person name="Sugawara M."/>
            <person name="Takahashi M."/>
            <person name="Kanda K."/>
            <person name="Yokoi T."/>
            <person name="Furuya T."/>
            <person name="Kikkawa E."/>
            <person name="Omura Y."/>
            <person name="Abe K."/>
            <person name="Kamihara K."/>
            <person name="Katsuta N."/>
            <person name="Sato K."/>
            <person name="Tanikawa M."/>
            <person name="Yamazaki M."/>
            <person name="Ninomiya K."/>
            <person name="Ishibashi T."/>
            <person name="Yamashita H."/>
            <person name="Murakawa K."/>
            <person name="Fujimori K."/>
            <person name="Tanai H."/>
            <person name="Kimata M."/>
            <person name="Watanabe M."/>
            <person name="Hiraoka S."/>
            <person name="Chiba Y."/>
            <person name="Ishida S."/>
            <person name="Ono Y."/>
            <person name="Takiguchi S."/>
            <person name="Watanabe S."/>
            <person name="Yosida M."/>
            <person name="Hotuta T."/>
            <person name="Kusano J."/>
            <person name="Kanehori K."/>
            <person name="Takahashi-Fujii A."/>
            <person name="Hara H."/>
            <person name="Tanase T.-O."/>
            <person name="Nomura Y."/>
            <person name="Togiya S."/>
            <person name="Komai F."/>
            <person name="Hara R."/>
            <person name="Takeuchi K."/>
            <person name="Arita M."/>
            <person name="Imose N."/>
            <person name="Musashino K."/>
            <person name="Yuuki H."/>
            <person name="Oshima A."/>
            <person name="Sasaki N."/>
            <person name="Aotsuka S."/>
            <person name="Yoshikawa Y."/>
            <person name="Matsunawa H."/>
            <person name="Ichihara T."/>
            <person name="Shiohata N."/>
            <person name="Sano S."/>
            <person name="Moriya S."/>
            <person name="Momiyama H."/>
            <person name="Satoh N."/>
            <person name="Takami S."/>
            <person name="Terashima Y."/>
            <person name="Suzuki O."/>
            <person name="Nakagawa S."/>
            <person name="Senoh A."/>
            <person name="Mizoguchi H."/>
            <person name="Goto Y."/>
            <person name="Shimizu F."/>
            <person name="Wakebe H."/>
            <person name="Hishigaki H."/>
            <person name="Watanabe T."/>
            <person name="Sugiyama A."/>
            <person name="Takemoto M."/>
            <person name="Kawakami B."/>
            <person name="Yamazaki M."/>
            <person name="Watanabe K."/>
            <person name="Kumagai A."/>
            <person name="Itakura S."/>
            <person name="Fukuzumi Y."/>
            <person name="Fujimori Y."/>
            <person name="Komiyama M."/>
            <person name="Tashiro H."/>
            <person name="Tanigami A."/>
            <person name="Fujiwara T."/>
            <person name="Ono T."/>
            <person name="Yamada K."/>
            <person name="Fujii Y."/>
            <person name="Ozaki K."/>
            <person name="Hirao M."/>
            <person name="Ohmori Y."/>
            <person name="Kawabata A."/>
            <person name="Hikiji T."/>
            <person name="Kobatake N."/>
            <person name="Inagaki H."/>
            <person name="Ikema Y."/>
            <person name="Okamoto S."/>
            <person name="Okitani R."/>
            <person name="Kawakami T."/>
            <person name="Noguchi S."/>
            <person name="Itoh T."/>
            <person name="Shigeta K."/>
            <person name="Senba T."/>
            <person name="Matsumura K."/>
            <person name="Nakajima Y."/>
            <person name="Mizuno T."/>
            <person name="Morinaga M."/>
            <person name="Sasaki M."/>
            <person name="Togashi T."/>
            <person name="Oyama M."/>
            <person name="Hata H."/>
            <person name="Watanabe M."/>
            <person name="Komatsu T."/>
            <person name="Mizushima-Sugano J."/>
            <person name="Satoh T."/>
            <person name="Shirai Y."/>
            <person name="Takahashi Y."/>
            <person name="Nakagawa K."/>
            <person name="Okumura K."/>
            <person name="Nagase T."/>
            <person name="Nomura N."/>
            <person name="Kikuchi H."/>
            <person name="Masuho Y."/>
            <person name="Yamashita R."/>
            <person name="Nakai K."/>
            <person name="Yada T."/>
            <person name="Nakamura Y."/>
            <person name="Ohara O."/>
            <person name="Isogai T."/>
            <person name="Sugano S."/>
        </authorList>
    </citation>
    <scope>NUCLEOTIDE SEQUENCE [LARGE SCALE MRNA] (ISOFORM 2)</scope>
    <source>
        <tissue>Testis</tissue>
    </source>
</reference>
<reference key="3">
    <citation type="journal article" date="2004" name="Nature">
        <title>DNA sequence and analysis of human chromosome 9.</title>
        <authorList>
            <person name="Humphray S.J."/>
            <person name="Oliver K."/>
            <person name="Hunt A.R."/>
            <person name="Plumb R.W."/>
            <person name="Loveland J.E."/>
            <person name="Howe K.L."/>
            <person name="Andrews T.D."/>
            <person name="Searle S."/>
            <person name="Hunt S.E."/>
            <person name="Scott C.E."/>
            <person name="Jones M.C."/>
            <person name="Ainscough R."/>
            <person name="Almeida J.P."/>
            <person name="Ambrose K.D."/>
            <person name="Ashwell R.I.S."/>
            <person name="Babbage A.K."/>
            <person name="Babbage S."/>
            <person name="Bagguley C.L."/>
            <person name="Bailey J."/>
            <person name="Banerjee R."/>
            <person name="Barker D.J."/>
            <person name="Barlow K.F."/>
            <person name="Bates K."/>
            <person name="Beasley H."/>
            <person name="Beasley O."/>
            <person name="Bird C.P."/>
            <person name="Bray-Allen S."/>
            <person name="Brown A.J."/>
            <person name="Brown J.Y."/>
            <person name="Burford D."/>
            <person name="Burrill W."/>
            <person name="Burton J."/>
            <person name="Carder C."/>
            <person name="Carter N.P."/>
            <person name="Chapman J.C."/>
            <person name="Chen Y."/>
            <person name="Clarke G."/>
            <person name="Clark S.Y."/>
            <person name="Clee C.M."/>
            <person name="Clegg S."/>
            <person name="Collier R.E."/>
            <person name="Corby N."/>
            <person name="Crosier M."/>
            <person name="Cummings A.T."/>
            <person name="Davies J."/>
            <person name="Dhami P."/>
            <person name="Dunn M."/>
            <person name="Dutta I."/>
            <person name="Dyer L.W."/>
            <person name="Earthrowl M.E."/>
            <person name="Faulkner L."/>
            <person name="Fleming C.J."/>
            <person name="Frankish A."/>
            <person name="Frankland J.A."/>
            <person name="French L."/>
            <person name="Fricker D.G."/>
            <person name="Garner P."/>
            <person name="Garnett J."/>
            <person name="Ghori J."/>
            <person name="Gilbert J.G.R."/>
            <person name="Glison C."/>
            <person name="Grafham D.V."/>
            <person name="Gribble S."/>
            <person name="Griffiths C."/>
            <person name="Griffiths-Jones S."/>
            <person name="Grocock R."/>
            <person name="Guy J."/>
            <person name="Hall R.E."/>
            <person name="Hammond S."/>
            <person name="Harley J.L."/>
            <person name="Harrison E.S.I."/>
            <person name="Hart E.A."/>
            <person name="Heath P.D."/>
            <person name="Henderson C.D."/>
            <person name="Hopkins B.L."/>
            <person name="Howard P.J."/>
            <person name="Howden P.J."/>
            <person name="Huckle E."/>
            <person name="Johnson C."/>
            <person name="Johnson D."/>
            <person name="Joy A.A."/>
            <person name="Kay M."/>
            <person name="Keenan S."/>
            <person name="Kershaw J.K."/>
            <person name="Kimberley A.M."/>
            <person name="King A."/>
            <person name="Knights A."/>
            <person name="Laird G.K."/>
            <person name="Langford C."/>
            <person name="Lawlor S."/>
            <person name="Leongamornlert D.A."/>
            <person name="Leversha M."/>
            <person name="Lloyd C."/>
            <person name="Lloyd D.M."/>
            <person name="Lovell J."/>
            <person name="Martin S."/>
            <person name="Mashreghi-Mohammadi M."/>
            <person name="Matthews L."/>
            <person name="McLaren S."/>
            <person name="McLay K.E."/>
            <person name="McMurray A."/>
            <person name="Milne S."/>
            <person name="Nickerson T."/>
            <person name="Nisbett J."/>
            <person name="Nordsiek G."/>
            <person name="Pearce A.V."/>
            <person name="Peck A.I."/>
            <person name="Porter K.M."/>
            <person name="Pandian R."/>
            <person name="Pelan S."/>
            <person name="Phillimore B."/>
            <person name="Povey S."/>
            <person name="Ramsey Y."/>
            <person name="Rand V."/>
            <person name="Scharfe M."/>
            <person name="Sehra H.K."/>
            <person name="Shownkeen R."/>
            <person name="Sims S.K."/>
            <person name="Skuce C.D."/>
            <person name="Smith M."/>
            <person name="Steward C.A."/>
            <person name="Swarbreck D."/>
            <person name="Sycamore N."/>
            <person name="Tester J."/>
            <person name="Thorpe A."/>
            <person name="Tracey A."/>
            <person name="Tromans A."/>
            <person name="Thomas D.W."/>
            <person name="Wall M."/>
            <person name="Wallis J.M."/>
            <person name="West A.P."/>
            <person name="Whitehead S.L."/>
            <person name="Willey D.L."/>
            <person name="Williams S.A."/>
            <person name="Wilming L."/>
            <person name="Wray P.W."/>
            <person name="Young L."/>
            <person name="Ashurst J.L."/>
            <person name="Coulson A."/>
            <person name="Blocker H."/>
            <person name="Durbin R.M."/>
            <person name="Sulston J.E."/>
            <person name="Hubbard T."/>
            <person name="Jackson M.J."/>
            <person name="Bentley D.R."/>
            <person name="Beck S."/>
            <person name="Rogers J."/>
            <person name="Dunham I."/>
        </authorList>
    </citation>
    <scope>NUCLEOTIDE SEQUENCE [LARGE SCALE GENOMIC DNA]</scope>
</reference>
<reference key="4">
    <citation type="submission" date="2005-07" db="EMBL/GenBank/DDBJ databases">
        <authorList>
            <person name="Mural R.J."/>
            <person name="Istrail S."/>
            <person name="Sutton G.G."/>
            <person name="Florea L."/>
            <person name="Halpern A.L."/>
            <person name="Mobarry C.M."/>
            <person name="Lippert R."/>
            <person name="Walenz B."/>
            <person name="Shatkay H."/>
            <person name="Dew I."/>
            <person name="Miller J.R."/>
            <person name="Flanigan M.J."/>
            <person name="Edwards N.J."/>
            <person name="Bolanos R."/>
            <person name="Fasulo D."/>
            <person name="Halldorsson B.V."/>
            <person name="Hannenhalli S."/>
            <person name="Turner R."/>
            <person name="Yooseph S."/>
            <person name="Lu F."/>
            <person name="Nusskern D.R."/>
            <person name="Shue B.C."/>
            <person name="Zheng X.H."/>
            <person name="Zhong F."/>
            <person name="Delcher A.L."/>
            <person name="Huson D.H."/>
            <person name="Kravitz S.A."/>
            <person name="Mouchard L."/>
            <person name="Reinert K."/>
            <person name="Remington K.A."/>
            <person name="Clark A.G."/>
            <person name="Waterman M.S."/>
            <person name="Eichler E.E."/>
            <person name="Adams M.D."/>
            <person name="Hunkapiller M.W."/>
            <person name="Myers E.W."/>
            <person name="Venter J.C."/>
        </authorList>
    </citation>
    <scope>NUCLEOTIDE SEQUENCE [LARGE SCALE GENOMIC DNA]</scope>
</reference>
<reference key="5">
    <citation type="journal article" date="1996" name="DNA Res.">
        <title>Prediction of the coding sequences of unidentified human genes. VI. The coding sequences of 80 new genes (KIAA0201-KIAA0280) deduced by analysis of cDNA clones from cell line KG-1 and brain.</title>
        <authorList>
            <person name="Nagase T."/>
            <person name="Seki N."/>
            <person name="Ishikawa K."/>
            <person name="Ohira M."/>
            <person name="Kawarabayasi Y."/>
            <person name="Ohara O."/>
            <person name="Tanaka A."/>
            <person name="Kotani H."/>
            <person name="Miyajima N."/>
            <person name="Nomura N."/>
        </authorList>
    </citation>
    <scope>NUCLEOTIDE SEQUENCE [LARGE SCALE MRNA] OF 466-1164 (ISOFORM 1/2)</scope>
    <source>
        <tissue>Bone marrow</tissue>
    </source>
</reference>
<reference key="6">
    <citation type="submission" date="2000-02" db="EMBL/GenBank/DDBJ databases">
        <title>A silent mutation 1947 T--&gt;C in exon 15 of TSC1 in Chinese.</title>
        <authorList>
            <person name="Fang L."/>
            <person name="Wang N."/>
            <person name="Murong S.X."/>
            <person name="Wu Z.Y."/>
            <person name="Lin M.T."/>
        </authorList>
    </citation>
    <scope>NUCLEOTIDE SEQUENCE [GENOMIC DNA] OF 568-586</scope>
</reference>
<reference key="7">
    <citation type="journal article" date="1998" name="Cancer Res.">
        <title>Hamartin, the product of the tuberous sclerosis 1 (TSC1) gene, interacts with tuberin and appears to be localized to cytoplasmic vesicles.</title>
        <authorList>
            <person name="Plank T.L."/>
            <person name="Yeung R.S."/>
            <person name="Henske E.P."/>
        </authorList>
    </citation>
    <scope>SUBCELLULAR LOCATION</scope>
    <scope>INTERACTION WITH TSC2</scope>
</reference>
<reference key="8">
    <citation type="journal article" date="1998" name="Hum. Mol. Genet.">
        <title>Interaction between hamartin and tuberin, the TSC1 and TSC2 gene products.</title>
        <authorList>
            <person name="van Slegtenhorst M.A."/>
            <person name="Nellist M."/>
            <person name="Nagelkerken B."/>
            <person name="Cheadle J.P."/>
            <person name="Snell R.G."/>
            <person name="van den Ouweland A.M.W."/>
            <person name="Reuser A."/>
            <person name="Sampson J.R."/>
            <person name="Halley D.J.J."/>
            <person name="van der Sluijs P."/>
        </authorList>
    </citation>
    <scope>INTERACTION WITH TSC2</scope>
</reference>
<reference key="9">
    <citation type="journal article" date="1999" name="J. Biol. Chem.">
        <title>Characterization of the cytosolic tuberin-hamartin complex. Tuberin is a cytosolic chaperone for hamartin.</title>
        <authorList>
            <person name="Nellist M."/>
            <person name="van Slegtenhorst M.A."/>
            <person name="Goedbloed M."/>
            <person name="van den Ouweland A.M.W."/>
            <person name="Halley D.J.J."/>
            <person name="van der Sluijs P."/>
        </authorList>
    </citation>
    <scope>INTERACTION WITH TSC2</scope>
</reference>
<reference key="10">
    <citation type="journal article" date="2002" name="Nat. Cell Biol.">
        <title>TSC2 is phosphorylated and inhibited by Akt and suppresses mTOR signalling.</title>
        <authorList>
            <person name="Inoki K."/>
            <person name="Li Y."/>
            <person name="Zhu T."/>
            <person name="Wu J."/>
            <person name="Guan K.L."/>
        </authorList>
    </citation>
    <scope>FUNCTION</scope>
    <scope>INTERACTION WITH TSC2</scope>
</reference>
<reference key="11">
    <citation type="journal article" date="2003" name="Curr. Biol.">
        <title>Tuberous sclerosis complex gene products, Tuberin and Hamartin, control mTOR signaling by acting as a GTPase-activating protein complex toward Rheb.</title>
        <authorList>
            <person name="Tee A.R."/>
            <person name="Manning B.D."/>
            <person name="Roux P.P."/>
            <person name="Cantley L.C."/>
            <person name="Blenis J."/>
        </authorList>
    </citation>
    <scope>FUNCTION</scope>
    <scope>INTERACTION WITH TSC2</scope>
</reference>
<reference key="12">
    <citation type="journal article" date="2002" name="J. Hum. Genet.">
        <title>Mutation analysis of the TSC1 and TSC2 genes in Japanese patients with pulmonary lymphangioleiomyomatosis.</title>
        <authorList>
            <person name="Sato T."/>
            <person name="Seyama K."/>
            <person name="Fujii H."/>
            <person name="Maruyama H."/>
            <person name="Setoguchi Y."/>
            <person name="Iwakami S."/>
            <person name="Fukuchi Y."/>
            <person name="Hino O."/>
        </authorList>
    </citation>
    <scope>INVOLVEMENT IN LAM</scope>
    <scope>VARIANT TSC1 165-CYS--SER-1164 DEL</scope>
</reference>
<reference key="13">
    <citation type="journal article" date="2002" name="Proc. Natl. Acad. Sci. U.S.A.">
        <title>Tuberous sclerosis complex-1 and -2 gene products function together to inhibit mammalian target of rapamycin (mTOR)-mediated downstream signaling.</title>
        <authorList>
            <person name="Tee A.R."/>
            <person name="Fingar D.C."/>
            <person name="Manning B.D."/>
            <person name="Kwiatkowski D.J."/>
            <person name="Cantley L.C."/>
            <person name="Blenis J."/>
        </authorList>
    </citation>
    <scope>FUNCTION</scope>
</reference>
<reference key="14">
    <citation type="journal article" date="2004" name="Mol. Cell. Biol.">
        <title>Biochemical and functional characterizations of small GTPase Rheb and TSC2 GAP activity.</title>
        <authorList>
            <person name="Li Y."/>
            <person name="Inoki K."/>
            <person name="Guan K.-L."/>
        </authorList>
    </citation>
    <scope>FUNCTION</scope>
</reference>
<reference key="15">
    <citation type="journal article" date="2005" name="Biochem. Biophys. Res. Commun.">
        <title>Phosphorylation and binding partner analysis of the TSC1-TSC2 complex.</title>
        <authorList>
            <person name="Nellist M."/>
            <person name="Burgers P.C."/>
            <person name="van den Ouweland A.M.W."/>
            <person name="Halley D.J.J."/>
            <person name="Luider T.M."/>
        </authorList>
    </citation>
    <scope>PHOSPHORYLATION AT SER-505</scope>
    <scope>IDENTIFICATION BY MASS SPECTROMETRY</scope>
    <scope>INTERACTION WITH DOCK7 AND TSC2</scope>
</reference>
<reference key="16">
    <citation type="journal article" date="2006" name="J. Biol. Chem.">
        <title>TSC1 stabilizes TSC2 by inhibiting the interaction between TSC2 and the HERC1 ubiquitin ligase.</title>
        <authorList>
            <person name="Chong-Kopera H."/>
            <person name="Inoki K."/>
            <person name="Li Y."/>
            <person name="Zhu T."/>
            <person name="Garcia-Gonzalo F.R."/>
            <person name="Rosa J.L."/>
            <person name="Guan K.-L."/>
        </authorList>
    </citation>
    <scope>FUNCTION</scope>
    <scope>INTERACTION WITH TSC2</scope>
</reference>
<reference key="17">
    <citation type="journal article" date="2007" name="Biochem. Biophys. Res. Commun.">
        <title>Identification of TBC7 having TBC domain as a novel binding protein to TSC1-TSC2 complex.</title>
        <authorList>
            <person name="Nakashima A."/>
            <person name="Yoshino K."/>
            <person name="Miyamoto T."/>
            <person name="Eguchi S."/>
            <person name="Oshiro N."/>
            <person name="Kikkawa U."/>
            <person name="Yonezawa K."/>
        </authorList>
    </citation>
    <scope>INTERACTION WITH TBC1D7</scope>
</reference>
<reference key="18">
    <citation type="journal article" date="2007" name="Science">
        <title>ATM and ATR substrate analysis reveals extensive protein networks responsive to DNA damage.</title>
        <authorList>
            <person name="Matsuoka S."/>
            <person name="Ballif B.A."/>
            <person name="Smogorzewska A."/>
            <person name="McDonald E.R. III"/>
            <person name="Hurov K.E."/>
            <person name="Luo J."/>
            <person name="Bakalarski C.E."/>
            <person name="Zhao Z."/>
            <person name="Solimini N."/>
            <person name="Lerenthal Y."/>
            <person name="Shiloh Y."/>
            <person name="Gygi S.P."/>
            <person name="Elledge S.J."/>
        </authorList>
    </citation>
    <scope>IDENTIFICATION BY MASS SPECTROMETRY [LARGE SCALE ANALYSIS]</scope>
    <source>
        <tissue>Embryonic kidney</tissue>
    </source>
</reference>
<reference key="19">
    <citation type="journal article" date="2008" name="Genes Dev.">
        <title>WD40 protein FBW5 promotes ubiquitination of tumor suppressor TSC2 by DDB1-CUL4-ROC1 ligase.</title>
        <authorList>
            <person name="Hu J."/>
            <person name="Zacharek S."/>
            <person name="He Y.J."/>
            <person name="Lee H."/>
            <person name="Shumway S."/>
            <person name="Duronio R.J."/>
            <person name="Xiong Y."/>
        </authorList>
    </citation>
    <scope>INTERACTION WITH FBXW5</scope>
</reference>
<reference key="20">
    <citation type="journal article" date="2008" name="J. Proteome Res.">
        <title>Phosphoproteome of resting human platelets.</title>
        <authorList>
            <person name="Zahedi R.P."/>
            <person name="Lewandrowski U."/>
            <person name="Wiesner J."/>
            <person name="Wortelkamp S."/>
            <person name="Moebius J."/>
            <person name="Schuetz C."/>
            <person name="Walter U."/>
            <person name="Gambaryan S."/>
            <person name="Sickmann A."/>
        </authorList>
    </citation>
    <scope>IDENTIFICATION BY MASS SPECTROMETRY [LARGE SCALE ANALYSIS]</scope>
    <source>
        <tissue>Platelet</tissue>
    </source>
</reference>
<reference key="21">
    <citation type="journal article" date="2008" name="Proc. Natl. Acad. Sci. U.S.A.">
        <title>A quantitative atlas of mitotic phosphorylation.</title>
        <authorList>
            <person name="Dephoure N."/>
            <person name="Zhou C."/>
            <person name="Villen J."/>
            <person name="Beausoleil S.A."/>
            <person name="Bakalarski C.E."/>
            <person name="Elledge S.J."/>
            <person name="Gygi S.P."/>
        </authorList>
    </citation>
    <scope>PHOSPHORYLATION [LARGE SCALE ANALYSIS] AT SER-505; SER-511 AND SER-598</scope>
    <scope>IDENTIFICATION BY MASS SPECTROMETRY [LARGE SCALE ANALYSIS]</scope>
    <source>
        <tissue>Cervix carcinoma</tissue>
    </source>
</reference>
<reference key="22">
    <citation type="journal article" date="2009" name="Anal. Chem.">
        <title>Lys-N and trypsin cover complementary parts of the phosphoproteome in a refined SCX-based approach.</title>
        <authorList>
            <person name="Gauci S."/>
            <person name="Helbig A.O."/>
            <person name="Slijper M."/>
            <person name="Krijgsveld J."/>
            <person name="Heck A.J."/>
            <person name="Mohammed S."/>
        </authorList>
    </citation>
    <scope>IDENTIFICATION BY MASS SPECTROMETRY [LARGE SCALE ANALYSIS]</scope>
</reference>
<reference key="23">
    <citation type="journal article" date="2009" name="Sci. Signal.">
        <title>Quantitative phosphoproteomic analysis of T cell receptor signaling reveals system-wide modulation of protein-protein interactions.</title>
        <authorList>
            <person name="Mayya V."/>
            <person name="Lundgren D.H."/>
            <person name="Hwang S.-I."/>
            <person name="Rezaul K."/>
            <person name="Wu L."/>
            <person name="Eng J.K."/>
            <person name="Rodionov V."/>
            <person name="Han D.K."/>
        </authorList>
    </citation>
    <scope>PHOSPHORYLATION [LARGE SCALE ANALYSIS] AT SER-505</scope>
    <scope>IDENTIFICATION BY MASS SPECTROMETRY [LARGE SCALE ANALYSIS]</scope>
    <source>
        <tissue>Leukemic T-cell</tissue>
    </source>
</reference>
<reference key="24">
    <citation type="journal article" date="2011" name="BMC Syst. Biol.">
        <title>Initial characterization of the human central proteome.</title>
        <authorList>
            <person name="Burkard T.R."/>
            <person name="Planyavsky M."/>
            <person name="Kaupe I."/>
            <person name="Breitwieser F.P."/>
            <person name="Buerckstuemmer T."/>
            <person name="Bennett K.L."/>
            <person name="Superti-Furga G."/>
            <person name="Colinge J."/>
        </authorList>
    </citation>
    <scope>IDENTIFICATION BY MASS SPECTROMETRY [LARGE SCALE ANALYSIS]</scope>
</reference>
<reference key="25">
    <citation type="journal article" date="2012" name="Mol. Cell">
        <title>TBC1D7 is a third subunit of the TSC1-TSC2 complex upstream of mTORC1.</title>
        <authorList>
            <person name="Dibble C.C."/>
            <person name="Elis W."/>
            <person name="Menon S."/>
            <person name="Qin W."/>
            <person name="Klekota J."/>
            <person name="Asara J.M."/>
            <person name="Finan P.M."/>
            <person name="Kwiatkowski D.J."/>
            <person name="Murphy L.O."/>
            <person name="Manning B.D."/>
        </authorList>
    </citation>
    <scope>IDENTIFICATION IN THE TSC-TBC COMPLEX</scope>
</reference>
<reference key="26">
    <citation type="journal article" date="2013" name="J. Proteome Res.">
        <title>Toward a comprehensive characterization of a human cancer cell phosphoproteome.</title>
        <authorList>
            <person name="Zhou H."/>
            <person name="Di Palma S."/>
            <person name="Preisinger C."/>
            <person name="Peng M."/>
            <person name="Polat A.N."/>
            <person name="Heck A.J."/>
            <person name="Mohammed S."/>
        </authorList>
    </citation>
    <scope>PHOSPHORYLATION [LARGE SCALE ANALYSIS] AT SER-487; SER-505 AND SER-521</scope>
    <scope>IDENTIFICATION BY MASS SPECTROMETRY [LARGE SCALE ANALYSIS]</scope>
    <source>
        <tissue>Cervix carcinoma</tissue>
        <tissue>Erythroleukemia</tissue>
    </source>
</reference>
<reference key="27">
    <citation type="journal article" date="2014" name="Cell">
        <title>Spatial control of the TSC complex integrates insulin and nutrient regulation of mTORC1 at the lysosome.</title>
        <authorList>
            <person name="Menon S."/>
            <person name="Dibble C.C."/>
            <person name="Talbott G."/>
            <person name="Hoxhaj G."/>
            <person name="Valvezan A.J."/>
            <person name="Takahashi H."/>
            <person name="Cantley L.C."/>
            <person name="Manning B.D."/>
        </authorList>
    </citation>
    <scope>FUNCTION</scope>
    <scope>IDENTIFICATION IN THE TSC-TBC COMPLEX</scope>
    <scope>SUBCELLULAR LOCATION</scope>
</reference>
<reference key="28">
    <citation type="journal article" date="2014" name="J. Proteomics">
        <title>An enzyme assisted RP-RPLC approach for in-depth analysis of human liver phosphoproteome.</title>
        <authorList>
            <person name="Bian Y."/>
            <person name="Song C."/>
            <person name="Cheng K."/>
            <person name="Dong M."/>
            <person name="Wang F."/>
            <person name="Huang J."/>
            <person name="Sun D."/>
            <person name="Wang L."/>
            <person name="Ye M."/>
            <person name="Zou H."/>
        </authorList>
    </citation>
    <scope>PHOSPHORYLATION [LARGE SCALE ANALYSIS] AT SER-1100</scope>
    <scope>IDENTIFICATION BY MASS SPECTROMETRY [LARGE SCALE ANALYSIS]</scope>
    <source>
        <tissue>Liver</tissue>
    </source>
</reference>
<reference key="29">
    <citation type="journal article" date="2017" name="Am. J. Hum. Genet.">
        <title>Somatic mutations in TSC1 and TSC2 cause focal cortical dysplasia.</title>
        <authorList>
            <person name="Lim J.S."/>
            <person name="Gopalappa R."/>
            <person name="Kim S.H."/>
            <person name="Ramakrishna S."/>
            <person name="Lee M."/>
            <person name="Kim W.I."/>
            <person name="Kim J."/>
            <person name="Park S.M."/>
            <person name="Lee J."/>
            <person name="Oh J.H."/>
            <person name="Kim H.D."/>
            <person name="Park C.H."/>
            <person name="Lee J.S."/>
            <person name="Kim S."/>
            <person name="Kim D.S."/>
            <person name="Han J.M."/>
            <person name="Kang H.C."/>
            <person name="Kim H.H."/>
            <person name="Lee J.H."/>
        </authorList>
    </citation>
    <scope>FUNCTION</scope>
    <scope>INTERACTION WITH TSC2</scope>
    <scope>INVOLVEMENT IN FCORD2</scope>
    <scope>VARIANTS FCORD2 TRP-22 AND CYS-204</scope>
    <scope>CHARACTERIZATION OF VARIANTS FCORD2 TRP-22 AND CYS-204</scope>
</reference>
<reference key="30">
    <citation type="journal article" date="2017" name="EMBO J.">
        <title>Tumor suppressor Tsc1 is a new Hsp90 co-chaperone that facilitates folding of kinase and non-kinase clients.</title>
        <authorList>
            <person name="Woodford M.R."/>
            <person name="Sager R.A."/>
            <person name="Marris E."/>
            <person name="Dunn D.M."/>
            <person name="Blanden A.R."/>
            <person name="Murphy R.L."/>
            <person name="Rensing N."/>
            <person name="Shapiro O."/>
            <person name="Panaretou B."/>
            <person name="Prodromou C."/>
            <person name="Loh S.N."/>
            <person name="Gutmann D.H."/>
            <person name="Bourboulia D."/>
            <person name="Bratslavsky G."/>
            <person name="Wong M."/>
            <person name="Mollapour M."/>
        </authorList>
    </citation>
    <scope>FUNCTION</scope>
    <scope>IDENTIFICATION IN A COMPLEX WITH HSP90; HSP70; STIP1; CDC37; PPP5C; PTGES3; TSC2; AKT; CDK4; RAF1 AND NR3C1</scope>
    <scope>INTERACTION WITH HSP90AA1 AND TSC2</scope>
    <scope>VARIANT PRO-117</scope>
</reference>
<reference key="31">
    <citation type="journal article" date="2017" name="Nat. Commun.">
        <title>R2TP/Prefoldin-like component RUVBL1/RUVBL2 directly interacts with ZNHIT2 to regulate assembly of U5 small nuclear ribonucleoprotein.</title>
        <authorList>
            <person name="Cloutier P."/>
            <person name="Poitras C."/>
            <person name="Durand M."/>
            <person name="Hekmat O."/>
            <person name="Fiola-Masson E."/>
            <person name="Bouchard A."/>
            <person name="Faubert D."/>
            <person name="Chabot B."/>
            <person name="Coulombe B."/>
        </authorList>
    </citation>
    <scope>INTERACTION WITH RPAP3 AND URI1</scope>
</reference>
<reference key="32">
    <citation type="journal article" date="2017" name="Nat. Commun.">
        <title>WIPI3 and WIPI4 beta-propellers are scaffolds for LKB1-AMPK-TSC signalling circuits in the control of autophagy.</title>
        <authorList>
            <person name="Bakula D."/>
            <person name="Mueller A.J."/>
            <person name="Zuleger T."/>
            <person name="Takacs Z."/>
            <person name="Franz-Wachtel M."/>
            <person name="Thost A.K."/>
            <person name="Brigger D."/>
            <person name="Tschan M.P."/>
            <person name="Frickey T."/>
            <person name="Robenek H."/>
            <person name="Macek B."/>
            <person name="Proikas-Cezanne T."/>
        </authorList>
    </citation>
    <scope>INTERACTION WITH WDR45B</scope>
    <scope>REGION</scope>
</reference>
<reference key="33">
    <citation type="journal article" date="2021" name="EMBO J.">
        <title>The E3 ubiquitin ligase Peli1 regulates the metabolic actions of mTORC1 to suppress antitumor T cell responses.</title>
        <authorList>
            <person name="Ko C.J."/>
            <person name="Zhang L."/>
            <person name="Jie Z."/>
            <person name="Zhu L."/>
            <person name="Zhou X."/>
            <person name="Xie X."/>
            <person name="Gao T."/>
            <person name="Yang J.Y."/>
            <person name="Cheng X."/>
            <person name="Sun S.C."/>
        </authorList>
    </citation>
    <scope>FUNCTION</scope>
    <scope>MUTAGENESIS OF LYS-30 AND LYS-632</scope>
    <scope>UBIQUITINATION AT LYS-30 BY PELI1</scope>
    <scope>INTERACTION WITH TSC2</scope>
</reference>
<reference evidence="43" key="34">
    <citation type="journal article" date="2016" name="J. Biol. Chem.">
        <title>Structural basis of the interaction between tuberous sclerosis complex 1 (TSC1) and Tre2-Bub2-Cdc16 domain family member 7 (TBC1D7).</title>
        <authorList>
            <person name="Qin J."/>
            <person name="Wang Z."/>
            <person name="Hoogeveen-Westerveld M."/>
            <person name="Shen G."/>
            <person name="Gong W."/>
            <person name="Nellist M."/>
            <person name="Xu W."/>
        </authorList>
    </citation>
    <scope>X-RAY CRYSTALLOGRAPHY (3.10 ANGSTROMS) OF 939-992 IN COMPLEX WITH TBC1D7</scope>
    <scope>INTERACTION WITH TBC1D7</scope>
    <scope>MUTAGENESIS OF LEU-941; 954-ILE--ILE-962; ILE-954; PHE-958; ILE-962 AND 965-LEU--LEU-969</scope>
</reference>
<reference evidence="44" key="35">
    <citation type="journal article" date="2021" name="Nat. Commun.">
        <title>Structural insights into TSC complex assembly and GAP activity on Rheb.</title>
        <authorList>
            <person name="Yang H."/>
            <person name="Yu Z."/>
            <person name="Chen X."/>
            <person name="Li J."/>
            <person name="Li N."/>
            <person name="Cheng J."/>
            <person name="Gao N."/>
            <person name="Yuan H.X."/>
            <person name="Ye D."/>
            <person name="Guan K.L."/>
            <person name="Xu Y."/>
        </authorList>
    </citation>
    <scope>STRUCTURE BY ELECTRON MICROSCOPY (4.40 ANGSTROMS) IN COMPLEX WITH TBC1D7 AND TSC2</scope>
    <scope>IDENTIFICATION IN THE TSC-TBC COMPLEX</scope>
</reference>
<reference key="36">
    <citation type="journal article" date="1997" name="Hum. Mol. Genet.">
        <title>Molecular genetic and phenotypic analysis reveals differences between TSC1 and TSC2 associated familial and sporadic tuberous sclerosis.</title>
        <authorList>
            <person name="Jones A.C."/>
            <person name="Daniells C.E."/>
            <person name="Snell R.G."/>
            <person name="Tachataki M."/>
            <person name="Idziaszczyk S.A."/>
            <person name="Krawczak M."/>
            <person name="Sampson J.R."/>
            <person name="Cheadle J.P."/>
        </authorList>
    </citation>
    <scope>VARIANT TSC1 GLU-726</scope>
    <scope>VARIANTS THR-322; TYR-732 AND SER-1035</scope>
    <source>
        <tissue>Peripheral blood</tissue>
    </source>
</reference>
<reference key="37">
    <citation type="journal article" date="1998" name="Ann. Hum. Genet.">
        <title>Comprehensive mutational analysis of the TSC1 gene: observations on frequency of mutation, associated features, and nonpenetrance.</title>
        <authorList>
            <person name="Kwiatkowska J."/>
            <person name="Jozwiak S."/>
            <person name="Hall F."/>
            <person name="Henske E.P."/>
            <person name="Haines J.L."/>
            <person name="McNamara P."/>
            <person name="Braiser J."/>
            <person name="Wigowska-Sowinska J."/>
            <person name="Kasprzyk-Obara J."/>
            <person name="Short M.P."/>
            <person name="Kwiatkowski D.J."/>
        </authorList>
    </citation>
    <scope>VARIANTS THR-322; ARG-587; TYR-732; SER-1035 AND SER-1108</scope>
    <source>
        <tissue>Blood</tissue>
    </source>
</reference>
<reference key="38">
    <citation type="journal article" date="1999" name="Hum. Mutat.">
        <title>Protein truncation test for screening hamartin gene mutations and report of new disease-causing mutations.</title>
        <authorList>
            <person name="Benit P."/>
            <person name="Kara-Mostefa A."/>
            <person name="Hadj-Rabia S."/>
            <person name="Munnich A."/>
            <person name="Bonnefont J.-P."/>
        </authorList>
    </citation>
    <scope>VARIANT TSC1 PRO-72</scope>
</reference>
<reference key="39">
    <citation type="journal article" date="1999" name="Hum. Mutat.">
        <title>Analysis of both TSC1 and TSC2 for germline mutations in 126 unrelated patients with tuberous sclerosis.</title>
        <authorList>
            <person name="Niida Y."/>
            <person name="Lawrence-Smith N."/>
            <person name="Banwell A."/>
            <person name="Hammer E."/>
            <person name="Lewis J."/>
            <person name="Beauchamp R.L."/>
            <person name="Sims K."/>
            <person name="Ramesh V."/>
            <person name="Ozelius L."/>
        </authorList>
    </citation>
    <scope>VARIANTS THR-322; TYR-732 AND GLN-809</scope>
    <source>
        <tissue>Blood</tissue>
        <tissue>Lymphoblast</tissue>
    </source>
</reference>
<reference key="40">
    <citation type="journal article" date="1999" name="J. Hum. Genet.">
        <title>Mutational analysis of TSC1 and TSC2 genes in Japanese patients with tuberous sclerosis complex.</title>
        <authorList>
            <person name="Zhang H."/>
            <person name="Nanba E."/>
            <person name="Yamamoto T."/>
            <person name="Ninomiya H."/>
            <person name="Ohno K."/>
            <person name="Mizuguchi M."/>
            <person name="Takeshita K."/>
        </authorList>
    </citation>
    <scope>VARIANTS TSC1 ILE-417; GLU-654 AND SER-899</scope>
    <scope>VARIANT THR-322</scope>
    <source>
        <tissue>Blood</tissue>
    </source>
</reference>
<reference key="41">
    <citation type="journal article" date="1999" name="J. Med. Genet.">
        <title>Mutational spectrum of the TSC1 gene in a cohort of 225 tuberous sclerosis complex patients: no evidence for genotype-phenotype correlation.</title>
        <authorList>
            <person name="Van Slegtenhorst M.A."/>
            <person name="Verhoef S."/>
            <person name="Tempelaars A."/>
            <person name="Bakker L."/>
            <person name="Wang Q."/>
            <person name="Wessels M."/>
            <person name="Bakker R."/>
            <person name="Nellist M."/>
            <person name="Lindhout D."/>
            <person name="Halley D.J.J."/>
            <person name="van den Ouweland A.M.W."/>
        </authorList>
    </citation>
    <scope>VARIANTS TSC1</scope>
    <scope>VARIANTS</scope>
    <source>
        <tissue>Peripheral blood</tissue>
    </source>
</reference>
<reference key="42">
    <citation type="journal article" date="2000" name="Am. J. Med. Genet.">
        <title>Analysis of all exons of TSC1 and TSC2 genes for germline mutations in Japanese patients with tuberous sclerosis: report of 10 mutations.</title>
        <authorList>
            <person name="Yamashita Y."/>
            <person name="Ono J."/>
            <person name="Okada S."/>
            <person name="Wataya-Kaneda M."/>
            <person name="Yoshikawa K."/>
            <person name="Nishizawa M."/>
            <person name="Hirayama Y."/>
            <person name="Kobayashi E."/>
            <person name="Seyama K."/>
            <person name="Hino O."/>
        </authorList>
    </citation>
    <scope>VARIANTS THR-322; ILE-417; ASP-577 AND ARG-829</scope>
    <source>
        <tissue>Peripheral blood leukocyte</tissue>
    </source>
</reference>
<reference key="43">
    <citation type="journal article" date="2000" name="Hum. Mutat.">
        <title>Tuberous sclerosis type 1: three novel mutations detected in exon 15 by a combination of HDA and TGGE.</title>
        <authorList>
            <person name="Hass J."/>
            <person name="Mayer K."/>
            <person name="Rott H.-D."/>
        </authorList>
    </citation>
    <scope>VARIANT TSC1 GLN-500</scope>
</reference>
<reference key="44">
    <citation type="journal article" date="2002" name="Ann. Neurol.">
        <title>Focal cortical dysplasia of Taylor's balloon cell type: mutational analysis of the TSC1 gene indicates a pathogenic relationship to tuberous sclerosis.</title>
        <authorList>
            <person name="Becker A.J."/>
            <person name="Urbach H."/>
            <person name="Scheffler B."/>
            <person name="Baden T."/>
            <person name="Normann S."/>
            <person name="Lahl R."/>
            <person name="Pannek H.W."/>
            <person name="Tuxhorn I."/>
            <person name="Elger C.E."/>
            <person name="Schramm J."/>
            <person name="Wiestler O.D."/>
            <person name="Bluemcke I."/>
        </authorList>
    </citation>
    <scope>VARIANT TYR-732</scope>
</reference>
<reference key="45">
    <citation type="journal article" date="2008" name="Hum. Mol. Genet.">
        <title>Bladder tumour-derived somatic TSC1 missense mutations cause loss of function via distinct mechanisms.</title>
        <authorList>
            <person name="Pymar L.S."/>
            <person name="Platt F.M."/>
            <person name="Askham J.M."/>
            <person name="Morrison E.E."/>
            <person name="Knowles M.A."/>
        </authorList>
    </citation>
    <scope>VARIANTS ARG-68; CYS-158; ASP-206; LEU-216 AND ILE-417</scope>
    <scope>CHARACTERIZATION OF VARIANTS ARG-68; CYS-158; ASP-206; LEU-216 AND ILE-417</scope>
</reference>
<reference key="46">
    <citation type="journal article" date="2009" name="Eur. J. Hum. Genet.">
        <title>Missense mutations to the TSC1 gene cause tuberous sclerosis complex.</title>
        <authorList>
            <person name="Nellist M."/>
            <person name="van den Heuvel D."/>
            <person name="Schluep D."/>
            <person name="Exalto C."/>
            <person name="Goedbloed M."/>
            <person name="Maat-Kievit A."/>
            <person name="van Essen T."/>
            <person name="van Spaendonck-Zwarts K."/>
            <person name="Jansen F."/>
            <person name="Helderman P."/>
            <person name="Bartalini G."/>
            <person name="Vierimaa O."/>
            <person name="Penttinen M."/>
            <person name="van den Ende J."/>
            <person name="van den Ouweland A."/>
            <person name="Halley D."/>
        </authorList>
    </citation>
    <scope>VARIANTS TSC1 PRO-117; VAL-128 DEL; PRO-180; HIS-191; 198-ASN-PHE-199 DELINS ILE; ARG-224; LYS-246; ARG-305 AND TRP-305</scope>
    <scope>VARIANTS GLN-509; SER-1035 AND HIS-1097</scope>
    <scope>CHARACTERIZATION OF VARIANTS TSC1 PRO-117; VAL-128 DEL; PRO-180; HIS-191; 198-ASN-PHE-199 DELINS ILE; ARG-224; LYS-246; ARG-305 AND TRP-305</scope>
    <scope>CHARACTERIZATION OF VARIANTS GLN-509; SER-1035 AND HIS-1097</scope>
</reference>
<reference key="47">
    <citation type="journal article" date="2012" name="Hum. Mutat.">
        <title>Functional assessment of TSC1 missense variants identified in individuals with tuberous sclerosis complex.</title>
        <authorList>
            <person name="Hoogeveen-Westerveld M."/>
            <person name="Ekong R."/>
            <person name="Povey S."/>
            <person name="Karbassi I."/>
            <person name="Batish S.D."/>
            <person name="den Dunnen J.T."/>
            <person name="van Eeghen A."/>
            <person name="Thiele E."/>
            <person name="Mayer K."/>
            <person name="Dies K."/>
            <person name="Wen L."/>
            <person name="Thompson C."/>
            <person name="Sparagana S.P."/>
            <person name="Davies P."/>
            <person name="Aalfs C."/>
            <person name="van den Ouweland A."/>
            <person name="Halley D."/>
            <person name="Nellist M."/>
        </authorList>
    </citation>
    <scope>VARIANTS TSC1 ARG-61; ILE-126; ASP-132; ILE-133; GLN-336; SER-362; ILE-411; PRO-523; HIS-693; ARG-698; HIS-701; SER-762; GLY-811; THR-883; VAL-978; SER-1043 DEL AND TYR-1146</scope>
    <scope>VARIANTS SER-158; PRO-204; SER-448 AND VAL-567</scope>
    <scope>CHARACTERIZATION OF VARIANTS TSC1 ARG-61; PRO-117; ILE-126; ASP-132; ILE-133; GLN-336; SER-362; ILE-411; PRO-523; HIS-693; ARG-698; HIS-701; SER-762; GLY-811; THR-883; VAL-978; SER-1043 DEL AND TYR-1146</scope>
    <scope>CHARACTERIZATION OF VARIANTS SER-158; PRO-204; SER-448 AND VAL-567</scope>
</reference>
<accession>Q92574</accession>
<accession>B7Z897</accession>
<accession>Q5VVN5</accession>
<gene>
    <name evidence="40 42" type="primary">TSC1</name>
    <name evidence="39" type="synonym">KIAA0243</name>
    <name type="synonym">TSC</name>
</gene>
<sequence>MAQQANVGELLAMLDSPMLGVRDDVTAVFKENLNSDRGPMLVNTLVDYYLETSSQPALHILTTLQEPHDKHLLDRINEYVGKAATRLSILSLLGHVIRLQPSWKHKLSQAPLLPSLLKCLKMDTDVVVLTTGVLVLITMLPMIPQSGKQHLLDFFDIFGRLSSWCLKKPGHVAEVYLVHLHASVYALFHRLYGMYPCNFVSFLRSHYSMKENLETFEEVVKPMMEHVRIHPELVTGSKDHELDPRRWKRLETHDVVIECAKISLDPTEASYEDGYSVSHQISARFPHRSADVTTSPYADTQNSYGCATSTPYSTSRLMLLNMPGQLPQTLSSPSTRLITEPPQATLWSPSMVCGMTTPPTSPGNVPPDLSHPYSKVFGTTAGGKGTPLGTPATSPPPAPLCHSDDYVHISLPQATVTPPRKEERMDSARPCLHRQHHLLNDRGSEEPPGSKGSVTLSDLPGFLGDLASEEDSIEKDKEEAAISRELSEITTAEAEPVVPRGGFDSPFYRDSLPGSQRKTHSAASSSQGASVNPEPLHSSLDKLGPDTPKQAFTPIDLPCGSADESPAGDRECQTSLETSIFTPSPCKIPPPTRVGFGSGQPPPYDHLFEVALPKTAHHFVIRKTEELLKKAKGNTEEDGVPSTSPMEVLDRLIQQGADAHSKELNKLPLPSKSVDWTHFGGSPPSDEIRTLRDQLLLLHNQLLYERFKRQQHALRNRRLLRKVIKAAALEEHNAAMKDQLKLQEKDIQMWKVSLQKEQARYNQLQEQRDTMVTKLHSQIRQLQHDREEFYNQSQELQTKLEDCRNMIAELRIELKKANNKVCHTELLLSQVSQKLSNSESVQQQMEFLNRQLLVLGEVNELYLEQLQNKHSDTTKEVEMMKAAYRKELEKNRSHVLQQTQRLDTSQKRILELESHLAKKDHLLLEQKKYLEDVKLQARGQLQAAESRYEAQKRITQVFELEILDLYGRLEKDGLLKKLEEEKAEAAEAAEERLDCCNDGCSDSMVGHNEEASGHNGETKTPRPSSARGSSGSRGGGGSSSSSSELSTPEKPPHQRAGPFSSRWETTMGEASASIPTTVGSLPSSKSFLGMKARELFRNKSESQCDEDGMTSSLSESLKTELGKDLGVEAKIPLNLDGPHPSPPTPDSVGQLHIMDYNETHHEHS</sequence>
<organism>
    <name type="scientific">Homo sapiens</name>
    <name type="common">Human</name>
    <dbReference type="NCBI Taxonomy" id="9606"/>
    <lineage>
        <taxon>Eukaryota</taxon>
        <taxon>Metazoa</taxon>
        <taxon>Chordata</taxon>
        <taxon>Craniata</taxon>
        <taxon>Vertebrata</taxon>
        <taxon>Euteleostomi</taxon>
        <taxon>Mammalia</taxon>
        <taxon>Eutheria</taxon>
        <taxon>Euarchontoglires</taxon>
        <taxon>Primates</taxon>
        <taxon>Haplorrhini</taxon>
        <taxon>Catarrhini</taxon>
        <taxon>Hominidae</taxon>
        <taxon>Homo</taxon>
    </lineage>
</organism>
<name>TSC1_HUMAN</name>
<proteinExistence type="evidence at protein level"/>